<keyword id="KW-0002">3D-structure</keyword>
<keyword id="KW-0067">ATP-binding</keyword>
<keyword id="KW-1262">Eukaryotic host gene expression shutoff by virus</keyword>
<keyword id="KW-1191">Eukaryotic host transcription shutoff by virus</keyword>
<keyword id="KW-0342">GTP-binding</keyword>
<keyword id="KW-0347">Helicase</keyword>
<keyword id="KW-1032">Host cell membrane</keyword>
<keyword id="KW-1034">Host cell projection</keyword>
<keyword id="KW-1035">Host cytoplasm</keyword>
<keyword id="KW-1036">Host cytoplasmic vesicle</keyword>
<keyword id="KW-1190">Host gene expression shutoff by virus</keyword>
<keyword id="KW-1043">Host membrane</keyword>
<keyword id="KW-1048">Host nucleus</keyword>
<keyword id="KW-0945">Host-virus interaction</keyword>
<keyword id="KW-0378">Hydrolase</keyword>
<keyword id="KW-1090">Inhibition of host innate immune response by virus</keyword>
<keyword id="KW-1114">Inhibition of host interferon signaling pathway by virus</keyword>
<keyword id="KW-1104">Inhibition of host RNA polymerase II by virus</keyword>
<keyword id="KW-1105">Inhibition of host STAT1 by virus</keyword>
<keyword id="KW-0922">Interferon antiviral system evasion</keyword>
<keyword id="KW-0449">Lipoprotein</keyword>
<keyword id="KW-0472">Membrane</keyword>
<keyword id="KW-0479">Metal-binding</keyword>
<keyword id="KW-0489">Methyltransferase</keyword>
<keyword id="KW-0506">mRNA capping</keyword>
<keyword id="KW-0507">mRNA processing</keyword>
<keyword id="KW-0511">Multifunctional enzyme</keyword>
<keyword id="KW-0547">Nucleotide-binding</keyword>
<keyword id="KW-0548">Nucleotidyltransferase</keyword>
<keyword id="KW-0564">Palmitate</keyword>
<keyword id="KW-0597">Phosphoprotein</keyword>
<keyword id="KW-0645">Protease</keyword>
<keyword id="KW-1185">Reference proteome</keyword>
<keyword id="KW-1159">RNA suppression of termination</keyword>
<keyword id="KW-0694">RNA-binding</keyword>
<keyword id="KW-0696">RNA-directed RNA polymerase</keyword>
<keyword id="KW-0949">S-adenosyl-L-methionine</keyword>
<keyword id="KW-0788">Thiol protease</keyword>
<keyword id="KW-0808">Transferase</keyword>
<keyword id="KW-0832">Ubl conjugation</keyword>
<keyword id="KW-0899">Viral immunoevasion</keyword>
<keyword id="KW-0693">Viral RNA replication</keyword>
<keyword id="KW-0862">Zinc</keyword>
<dbReference type="EC" id="2.1.1.-" evidence="3"/>
<dbReference type="EC" id="2.7.7.-" evidence="31"/>
<dbReference type="EC" id="3.4.22.-" evidence="4"/>
<dbReference type="EC" id="3.6.1.15" evidence="4"/>
<dbReference type="EC" id="3.6.1.74" evidence="2"/>
<dbReference type="EC" id="3.6.4.13" evidence="4"/>
<dbReference type="EC" id="3.1.3.84" evidence="38 4"/>
<dbReference type="EC" id="2.7.7.19" evidence="15"/>
<dbReference type="EC" id="2.7.7.48" evidence="6 19"/>
<dbReference type="EMBL" id="J02363">
    <property type="protein sequence ID" value="AAA96974.1"/>
    <property type="molecule type" value="Genomic_RNA"/>
</dbReference>
<dbReference type="EMBL" id="J02363">
    <property type="protein sequence ID" value="AAA96975.1"/>
    <property type="status" value="ALT_SEQ"/>
    <property type="molecule type" value="Genomic_RNA"/>
</dbReference>
<dbReference type="PIR" id="A03917">
    <property type="entry name" value="MNWVS"/>
</dbReference>
<dbReference type="RefSeq" id="NP_062888.1">
    <property type="nucleotide sequence ID" value="NC_001547.1"/>
</dbReference>
<dbReference type="RefSeq" id="NP_062889.1">
    <property type="nucleotide sequence ID" value="NC_001547.1"/>
</dbReference>
<dbReference type="PDB" id="4GUA">
    <property type="method" value="X-ray"/>
    <property type="resolution" value="2.85 A"/>
    <property type="chains" value="A/B/C=1011-1675"/>
</dbReference>
<dbReference type="PDB" id="7VB4">
    <property type="method" value="X-ray"/>
    <property type="resolution" value="1.86 A"/>
    <property type="chains" value="A/B=1994-2513"/>
</dbReference>
<dbReference type="PDB" id="7VW5">
    <property type="method" value="X-ray"/>
    <property type="resolution" value="2.30 A"/>
    <property type="chains" value="A/B=1994-2513"/>
</dbReference>
<dbReference type="PDBsum" id="4GUA"/>
<dbReference type="PDBsum" id="7VB4"/>
<dbReference type="PDBsum" id="7VW5"/>
<dbReference type="SMR" id="P03317"/>
<dbReference type="ELM" id="P03317"/>
<dbReference type="IntAct" id="P03317">
    <property type="interactions" value="2"/>
</dbReference>
<dbReference type="MEROPS" id="C09.001"/>
<dbReference type="SwissPalm" id="P03317"/>
<dbReference type="GeneID" id="1502153"/>
<dbReference type="GeneID" id="1502154"/>
<dbReference type="KEGG" id="vg:1502153"/>
<dbReference type="KEGG" id="vg:1502154"/>
<dbReference type="BRENDA" id="3.4.22.B79">
    <property type="organism ID" value="5737"/>
</dbReference>
<dbReference type="BRENDA" id="3.6.1.74">
    <property type="organism ID" value="5737"/>
</dbReference>
<dbReference type="Proteomes" id="UP000006710">
    <property type="component" value="Genome"/>
</dbReference>
<dbReference type="GO" id="GO:0044162">
    <property type="term" value="C:host cell cytoplasmic vesicle membrane"/>
    <property type="evidence" value="ECO:0007669"/>
    <property type="project" value="UniProtKB-SubCell"/>
</dbReference>
<dbReference type="GO" id="GO:0044176">
    <property type="term" value="C:host cell filopodium"/>
    <property type="evidence" value="ECO:0007669"/>
    <property type="project" value="UniProtKB-SubCell"/>
</dbReference>
<dbReference type="GO" id="GO:0042025">
    <property type="term" value="C:host cell nucleus"/>
    <property type="evidence" value="ECO:0007669"/>
    <property type="project" value="UniProtKB-SubCell"/>
</dbReference>
<dbReference type="GO" id="GO:0020002">
    <property type="term" value="C:host cell plasma membrane"/>
    <property type="evidence" value="ECO:0007669"/>
    <property type="project" value="UniProtKB-SubCell"/>
</dbReference>
<dbReference type="GO" id="GO:0016020">
    <property type="term" value="C:membrane"/>
    <property type="evidence" value="ECO:0007669"/>
    <property type="project" value="UniProtKB-KW"/>
</dbReference>
<dbReference type="GO" id="GO:0005524">
    <property type="term" value="F:ATP binding"/>
    <property type="evidence" value="ECO:0007669"/>
    <property type="project" value="UniProtKB-KW"/>
</dbReference>
<dbReference type="GO" id="GO:0016887">
    <property type="term" value="F:ATP hydrolysis activity"/>
    <property type="evidence" value="ECO:0007669"/>
    <property type="project" value="RHEA"/>
</dbReference>
<dbReference type="GO" id="GO:0008234">
    <property type="term" value="F:cysteine-type peptidase activity"/>
    <property type="evidence" value="ECO:0007669"/>
    <property type="project" value="UniProtKB-KW"/>
</dbReference>
<dbReference type="GO" id="GO:0005525">
    <property type="term" value="F:GTP binding"/>
    <property type="evidence" value="ECO:0007669"/>
    <property type="project" value="UniProtKB-KW"/>
</dbReference>
<dbReference type="GO" id="GO:0046872">
    <property type="term" value="F:metal ion binding"/>
    <property type="evidence" value="ECO:0007669"/>
    <property type="project" value="UniProtKB-KW"/>
</dbReference>
<dbReference type="GO" id="GO:0140818">
    <property type="term" value="F:mRNA 5'-triphosphate monophosphatase activity"/>
    <property type="evidence" value="ECO:0007669"/>
    <property type="project" value="RHEA"/>
</dbReference>
<dbReference type="GO" id="GO:0008174">
    <property type="term" value="F:mRNA methyltransferase activity"/>
    <property type="evidence" value="ECO:0000315"/>
    <property type="project" value="CACAO"/>
</dbReference>
<dbReference type="GO" id="GO:1990817">
    <property type="term" value="F:poly(A) RNA polymerase activity"/>
    <property type="evidence" value="ECO:0007669"/>
    <property type="project" value="UniProtKB-EC"/>
</dbReference>
<dbReference type="GO" id="GO:0004651">
    <property type="term" value="F:polynucleotide 5'-phosphatase activity"/>
    <property type="evidence" value="ECO:0007669"/>
    <property type="project" value="UniProtKB-EC"/>
</dbReference>
<dbReference type="GO" id="GO:0003723">
    <property type="term" value="F:RNA binding"/>
    <property type="evidence" value="ECO:0007669"/>
    <property type="project" value="UniProtKB-KW"/>
</dbReference>
<dbReference type="GO" id="GO:0003724">
    <property type="term" value="F:RNA helicase activity"/>
    <property type="evidence" value="ECO:0007669"/>
    <property type="project" value="UniProtKB-EC"/>
</dbReference>
<dbReference type="GO" id="GO:0003968">
    <property type="term" value="F:RNA-directed RNA polymerase activity"/>
    <property type="evidence" value="ECO:0007669"/>
    <property type="project" value="UniProtKB-KW"/>
</dbReference>
<dbReference type="GO" id="GO:0006370">
    <property type="term" value="P:7-methylguanosine mRNA capping"/>
    <property type="evidence" value="ECO:0007669"/>
    <property type="project" value="UniProtKB-KW"/>
</dbReference>
<dbReference type="GO" id="GO:0006351">
    <property type="term" value="P:DNA-templated transcription"/>
    <property type="evidence" value="ECO:0007669"/>
    <property type="project" value="InterPro"/>
</dbReference>
<dbReference type="GO" id="GO:0032259">
    <property type="term" value="P:methylation"/>
    <property type="evidence" value="ECO:0007669"/>
    <property type="project" value="UniProtKB-KW"/>
</dbReference>
<dbReference type="GO" id="GO:0016556">
    <property type="term" value="P:mRNA modification"/>
    <property type="evidence" value="ECO:0007669"/>
    <property type="project" value="InterPro"/>
</dbReference>
<dbReference type="GO" id="GO:0039690">
    <property type="term" value="P:positive stranded viral RNA replication"/>
    <property type="evidence" value="ECO:0000315"/>
    <property type="project" value="CACAO"/>
</dbReference>
<dbReference type="GO" id="GO:0006508">
    <property type="term" value="P:proteolysis"/>
    <property type="evidence" value="ECO:0007669"/>
    <property type="project" value="UniProtKB-KW"/>
</dbReference>
<dbReference type="GO" id="GO:0039657">
    <property type="term" value="P:symbiont-mediated suppression of host gene expression"/>
    <property type="evidence" value="ECO:0007669"/>
    <property type="project" value="UniProtKB-KW"/>
</dbReference>
<dbReference type="GO" id="GO:0052170">
    <property type="term" value="P:symbiont-mediated suppression of host innate immune response"/>
    <property type="evidence" value="ECO:0007669"/>
    <property type="project" value="UniProtKB-KW"/>
</dbReference>
<dbReference type="GO" id="GO:0039563">
    <property type="term" value="P:symbiont-mediated suppression of host JAK-STAT cascade via inhibition of STAT1 activity"/>
    <property type="evidence" value="ECO:0007669"/>
    <property type="project" value="UniProtKB-KW"/>
</dbReference>
<dbReference type="GO" id="GO:0039523">
    <property type="term" value="P:symbiont-mediated suppression of host mRNA transcription via inhibition of RNA polymerase II activity"/>
    <property type="evidence" value="ECO:0007669"/>
    <property type="project" value="UniProtKB-KW"/>
</dbReference>
<dbReference type="GO" id="GO:0039502">
    <property type="term" value="P:symbiont-mediated suppression of host type I interferon-mediated signaling pathway"/>
    <property type="evidence" value="ECO:0007669"/>
    <property type="project" value="UniProtKB-KW"/>
</dbReference>
<dbReference type="CDD" id="cd21557">
    <property type="entry name" value="Macro_X_Nsp3-like"/>
    <property type="match status" value="1"/>
</dbReference>
<dbReference type="CDD" id="cd23250">
    <property type="entry name" value="Togaviridae_RdRp"/>
    <property type="match status" value="1"/>
</dbReference>
<dbReference type="FunFam" id="3.40.220.10:FF:000015">
    <property type="entry name" value="Polyprotein P1234"/>
    <property type="match status" value="1"/>
</dbReference>
<dbReference type="FunFam" id="3.40.50.300:FF:001403">
    <property type="entry name" value="Polyprotein P1234"/>
    <property type="match status" value="1"/>
</dbReference>
<dbReference type="FunFam" id="3.40.50.300:FF:001415">
    <property type="entry name" value="Polyprotein P1234"/>
    <property type="match status" value="1"/>
</dbReference>
<dbReference type="FunFam" id="3.90.70.110:FF:000002">
    <property type="entry name" value="Polyprotein P1234"/>
    <property type="match status" value="1"/>
</dbReference>
<dbReference type="Gene3D" id="3.90.70.110">
    <property type="entry name" value="Alphavirus nsP2 protease domain"/>
    <property type="match status" value="1"/>
</dbReference>
<dbReference type="Gene3D" id="3.40.220.10">
    <property type="entry name" value="Leucine Aminopeptidase, subunit E, domain 1"/>
    <property type="match status" value="1"/>
</dbReference>
<dbReference type="Gene3D" id="3.40.50.300">
    <property type="entry name" value="P-loop containing nucleotide triphosphate hydrolases"/>
    <property type="match status" value="2"/>
</dbReference>
<dbReference type="Gene3D" id="3.40.50.150">
    <property type="entry name" value="Vaccinia Virus protein VP39"/>
    <property type="match status" value="1"/>
</dbReference>
<dbReference type="InterPro" id="IPR027351">
    <property type="entry name" value="(+)RNA_virus_helicase_core_dom"/>
</dbReference>
<dbReference type="InterPro" id="IPR002588">
    <property type="entry name" value="Alphavirus-like_MT_dom"/>
</dbReference>
<dbReference type="InterPro" id="IPR002620">
    <property type="entry name" value="Alphavirus_nsp2pro"/>
</dbReference>
<dbReference type="InterPro" id="IPR044936">
    <property type="entry name" value="Alphavirus_nsp2pro_sf"/>
</dbReference>
<dbReference type="InterPro" id="IPR043502">
    <property type="entry name" value="DNA/RNA_pol_sf"/>
</dbReference>
<dbReference type="InterPro" id="IPR002589">
    <property type="entry name" value="Macro_dom"/>
</dbReference>
<dbReference type="InterPro" id="IPR043472">
    <property type="entry name" value="Macro_dom-like"/>
</dbReference>
<dbReference type="InterPro" id="IPR044371">
    <property type="entry name" value="Macro_X_NSP3-like"/>
</dbReference>
<dbReference type="InterPro" id="IPR048891">
    <property type="entry name" value="nsP3_ZBD"/>
</dbReference>
<dbReference type="InterPro" id="IPR027417">
    <property type="entry name" value="P-loop_NTPase"/>
</dbReference>
<dbReference type="InterPro" id="IPR001788">
    <property type="entry name" value="RNA-dep_RNA_pol_alsuvir"/>
</dbReference>
<dbReference type="InterPro" id="IPR007094">
    <property type="entry name" value="RNA-dir_pol_PSvirus"/>
</dbReference>
<dbReference type="InterPro" id="IPR029063">
    <property type="entry name" value="SAM-dependent_MTases_sf"/>
</dbReference>
<dbReference type="InterPro" id="IPR047311">
    <property type="entry name" value="Togaviridae_RdRp"/>
</dbReference>
<dbReference type="InterPro" id="IPR049329">
    <property type="entry name" value="ToMV_Hel_N"/>
</dbReference>
<dbReference type="PANTHER" id="PTHR11106">
    <property type="entry name" value="GANGLIOSIDE INDUCED DIFFERENTIATION ASSOCIATED PROTEIN 2-RELATED"/>
    <property type="match status" value="1"/>
</dbReference>
<dbReference type="PANTHER" id="PTHR11106:SF27">
    <property type="entry name" value="MACRO DOMAIN-CONTAINING PROTEIN"/>
    <property type="match status" value="1"/>
</dbReference>
<dbReference type="Pfam" id="PF01661">
    <property type="entry name" value="Macro"/>
    <property type="match status" value="1"/>
</dbReference>
<dbReference type="Pfam" id="PF20852">
    <property type="entry name" value="nsP3_ZBD"/>
    <property type="match status" value="1"/>
</dbReference>
<dbReference type="Pfam" id="PF01707">
    <property type="entry name" value="Peptidase_C9"/>
    <property type="match status" value="1"/>
</dbReference>
<dbReference type="Pfam" id="PF00978">
    <property type="entry name" value="RdRP_2"/>
    <property type="match status" value="1"/>
</dbReference>
<dbReference type="Pfam" id="PF20896">
    <property type="entry name" value="ToMV_Hel_N"/>
    <property type="match status" value="1"/>
</dbReference>
<dbReference type="Pfam" id="PF01443">
    <property type="entry name" value="Viral_helicase1"/>
    <property type="match status" value="1"/>
</dbReference>
<dbReference type="Pfam" id="PF01660">
    <property type="entry name" value="Vmethyltransf"/>
    <property type="match status" value="1"/>
</dbReference>
<dbReference type="SMART" id="SM00506">
    <property type="entry name" value="A1pp"/>
    <property type="match status" value="1"/>
</dbReference>
<dbReference type="SUPFAM" id="SSF56672">
    <property type="entry name" value="DNA/RNA polymerases"/>
    <property type="match status" value="1"/>
</dbReference>
<dbReference type="SUPFAM" id="SSF52949">
    <property type="entry name" value="Macro domain-like"/>
    <property type="match status" value="1"/>
</dbReference>
<dbReference type="SUPFAM" id="SSF52540">
    <property type="entry name" value="P-loop containing nucleoside triphosphate hydrolases"/>
    <property type="match status" value="1"/>
</dbReference>
<dbReference type="SUPFAM" id="SSF53335">
    <property type="entry name" value="S-adenosyl-L-methionine-dependent methyltransferases"/>
    <property type="match status" value="1"/>
</dbReference>
<dbReference type="PROSITE" id="PS51743">
    <property type="entry name" value="ALPHAVIRUS_MT"/>
    <property type="match status" value="1"/>
</dbReference>
<dbReference type="PROSITE" id="PS51154">
    <property type="entry name" value="MACRO"/>
    <property type="match status" value="1"/>
</dbReference>
<dbReference type="PROSITE" id="PS51520">
    <property type="entry name" value="NSP2PRO"/>
    <property type="match status" value="1"/>
</dbReference>
<dbReference type="PROSITE" id="PS51657">
    <property type="entry name" value="PSRV_HELICASE"/>
    <property type="match status" value="1"/>
</dbReference>
<dbReference type="PROSITE" id="PS50507">
    <property type="entry name" value="RDRP_SSRNA_POS"/>
    <property type="match status" value="1"/>
</dbReference>
<evidence type="ECO:0000250" key="1">
    <source>
        <dbReference type="UniProtKB" id="O90368"/>
    </source>
</evidence>
<evidence type="ECO:0000250" key="2">
    <source>
        <dbReference type="UniProtKB" id="P08411"/>
    </source>
</evidence>
<evidence type="ECO:0000250" key="3">
    <source>
        <dbReference type="UniProtKB" id="P27282"/>
    </source>
</evidence>
<evidence type="ECO:0000250" key="4">
    <source>
        <dbReference type="UniProtKB" id="Q8JUX6"/>
    </source>
</evidence>
<evidence type="ECO:0000255" key="5">
    <source>
        <dbReference type="PROSITE-ProRule" id="PRU00490"/>
    </source>
</evidence>
<evidence type="ECO:0000255" key="6">
    <source>
        <dbReference type="PROSITE-ProRule" id="PRU00539"/>
    </source>
</evidence>
<evidence type="ECO:0000255" key="7">
    <source>
        <dbReference type="PROSITE-ProRule" id="PRU00853"/>
    </source>
</evidence>
<evidence type="ECO:0000255" key="8">
    <source>
        <dbReference type="PROSITE-ProRule" id="PRU00990"/>
    </source>
</evidence>
<evidence type="ECO:0000255" key="9">
    <source>
        <dbReference type="PROSITE-ProRule" id="PRU01079"/>
    </source>
</evidence>
<evidence type="ECO:0000256" key="10">
    <source>
        <dbReference type="SAM" id="MobiDB-lite"/>
    </source>
</evidence>
<evidence type="ECO:0000269" key="11">
    <source>
    </source>
</evidence>
<evidence type="ECO:0000269" key="12">
    <source>
    </source>
</evidence>
<evidence type="ECO:0000269" key="13">
    <source>
    </source>
</evidence>
<evidence type="ECO:0000269" key="14">
    <source>
    </source>
</evidence>
<evidence type="ECO:0000269" key="15">
    <source>
    </source>
</evidence>
<evidence type="ECO:0000269" key="16">
    <source>
    </source>
</evidence>
<evidence type="ECO:0000269" key="17">
    <source>
    </source>
</evidence>
<evidence type="ECO:0000269" key="18">
    <source>
    </source>
</evidence>
<evidence type="ECO:0000269" key="19">
    <source>
    </source>
</evidence>
<evidence type="ECO:0000269" key="20">
    <source>
    </source>
</evidence>
<evidence type="ECO:0000269" key="21">
    <source>
    </source>
</evidence>
<evidence type="ECO:0000269" key="22">
    <source>
    </source>
</evidence>
<evidence type="ECO:0000269" key="23">
    <source>
    </source>
</evidence>
<evidence type="ECO:0000269" key="24">
    <source>
    </source>
</evidence>
<evidence type="ECO:0000269" key="25">
    <source>
    </source>
</evidence>
<evidence type="ECO:0000269" key="26">
    <source>
    </source>
</evidence>
<evidence type="ECO:0000269" key="27">
    <source>
    </source>
</evidence>
<evidence type="ECO:0000269" key="28">
    <source>
    </source>
</evidence>
<evidence type="ECO:0000269" key="29">
    <source>
    </source>
</evidence>
<evidence type="ECO:0000269" key="30">
    <source>
    </source>
</evidence>
<evidence type="ECO:0000269" key="31">
    <source>
    </source>
</evidence>
<evidence type="ECO:0000269" key="32">
    <source>
    </source>
</evidence>
<evidence type="ECO:0000269" key="33">
    <source>
    </source>
</evidence>
<evidence type="ECO:0000269" key="34">
    <source>
    </source>
</evidence>
<evidence type="ECO:0000269" key="35">
    <source>
    </source>
</evidence>
<evidence type="ECO:0000269" key="36">
    <source>
    </source>
</evidence>
<evidence type="ECO:0000303" key="37">
    <source>
    </source>
</evidence>
<evidence type="ECO:0000305" key="38"/>
<evidence type="ECO:0000305" key="39">
    <source>
    </source>
</evidence>
<evidence type="ECO:0000305" key="40">
    <source>
    </source>
</evidence>
<evidence type="ECO:0000305" key="41">
    <source>
    </source>
</evidence>
<evidence type="ECO:0000305" key="42">
    <source>
    </source>
</evidence>
<evidence type="ECO:0000305" key="43">
    <source>
    </source>
</evidence>
<evidence type="ECO:0000305" key="44">
    <source>
    </source>
</evidence>
<evidence type="ECO:0000305" key="45">
    <source>
    </source>
</evidence>
<evidence type="ECO:0000305" key="46">
    <source>
    </source>
</evidence>
<evidence type="ECO:0000305" key="47">
    <source>
    </source>
</evidence>
<evidence type="ECO:0000305" key="48">
    <source>
    </source>
</evidence>
<evidence type="ECO:0000305" key="49">
    <source>
    </source>
</evidence>
<evidence type="ECO:0000305" key="50">
    <source>
    </source>
</evidence>
<evidence type="ECO:0000305" key="51">
    <source>
    </source>
</evidence>
<evidence type="ECO:0007744" key="52">
    <source>
        <dbReference type="PDB" id="4GUA"/>
    </source>
</evidence>
<evidence type="ECO:0007829" key="53">
    <source>
        <dbReference type="PDB" id="4GUA"/>
    </source>
</evidence>
<evidence type="ECO:0007829" key="54">
    <source>
        <dbReference type="PDB" id="7VB4"/>
    </source>
</evidence>
<evidence type="ECO:0007829" key="55">
    <source>
        <dbReference type="PDB" id="7VW5"/>
    </source>
</evidence>
<accession>P03317</accession>
<accession>Q87644</accession>
<reference key="1">
    <citation type="journal article" date="1984" name="Virology">
        <title>Complete nucleotide sequence of the genomic RNA of Sindbis virus.</title>
        <authorList>
            <person name="Strauss E.G."/>
            <person name="Rice C.M."/>
            <person name="Strauss J.H."/>
        </authorList>
    </citation>
    <scope>NUCLEOTIDE SEQUENCE [GENOMIC RNA]</scope>
</reference>
<reference key="2">
    <citation type="journal article" date="1983" name="J. Mol. Biol.">
        <title>The 5'-terminal sequences of the genomic RNAs of several alphaviruses.</title>
        <authorList>
            <person name="Ou J.H."/>
            <person name="Strauss E.G."/>
            <person name="Strauss J.H."/>
        </authorList>
    </citation>
    <scope>NUCLEOTIDE SEQUENCE [GENOMIC RNA] OF 1-54</scope>
</reference>
<reference key="3">
    <citation type="journal article" date="1983" name="Proc. Natl. Acad. Sci. U.S.A.">
        <title>Sequence coding for the alphavirus nonstructural proteins is interrupted by an opal termination codon.</title>
        <authorList>
            <person name="Strauss E.G."/>
            <person name="Rice C.M."/>
            <person name="Strauss J.H."/>
        </authorList>
    </citation>
    <scope>NUCLEOTIDE SEQUENCE [GENOMIC RNA] OF 1429-2512</scope>
</reference>
<reference key="4">
    <citation type="journal article" date="1982" name="Proc. Natl. Acad. Sci. U.S.A.">
        <title>Sequence studies of several alphavirus genomic RNAs in the region containing the start of the subgenomic RNA.</title>
        <authorList>
            <person name="Ou J.-H."/>
            <person name="Rice C.M."/>
            <person name="Dalgarno L."/>
            <person name="Strauss E.G."/>
            <person name="Strauss J.H."/>
        </authorList>
    </citation>
    <scope>NUCLEOTIDE SEQUENCE [GENOMIC RNA] OF 2431-2512</scope>
</reference>
<reference key="5">
    <citation type="journal article" date="1988" name="J. Cell Biol.">
        <title>Alphavirus RNA replicase is located on the cytoplasmic surface of endosomes and lysosomes.</title>
        <authorList>
            <person name="Froshauer S."/>
            <person name="Kartenbeck J."/>
            <person name="Helenius A."/>
        </authorList>
    </citation>
    <scope>SUBCELLULAR LOCATION (RNA-DIRECTED RNA POLYMERASE NSP4)</scope>
</reference>
<reference key="6">
    <citation type="journal article" date="1989" name="J. Virol.">
        <title>Processing the nonstructural polyproteins of sindbis virus: nonstructural proteinase is in the C-terminal half of nsP2 and functions both in cis and in trans.</title>
        <authorList>
            <person name="Hardy W.R."/>
            <person name="Strauss J.H."/>
        </authorList>
    </citation>
    <scope>PROTEOLYTIC CLEAVAGE (POLYPROTEIN P123)</scope>
</reference>
<reference key="7">
    <citation type="journal article" date="1990" name="Virology">
        <title>Cleavage between nsP1 and nsP2 initiates the processing pathway of Sindbis virus nonstructural polyprotein P123.</title>
        <authorList>
            <person name="Shirako Y."/>
            <person name="Strauss J.H."/>
        </authorList>
    </citation>
    <scope>PROTEOLYTIC CLEAVAGE (POLYPROTEIN P123)</scope>
    <scope>MUTAGENESIS OF GLY-539 AND GLY-1346</scope>
</reference>
<reference key="8">
    <citation type="journal article" date="1989" name="J. Virol.">
        <title>Mutagenesis of the in-frame opal termination codon preceding nsP4 of Sindbis virus: studies of translational readthrough and its effect on virus replication.</title>
        <authorList>
            <person name="Li G.P."/>
            <person name="Rice C.M."/>
        </authorList>
    </citation>
    <scope>MUTAGENESIS OF TYR-1896</scope>
    <scope>RIBOSOMAL READTHROUGH</scope>
</reference>
<reference key="9">
    <citation type="journal article" date="1990" name="EMBO J.">
        <title>Cleavage-site preferences of Sindbis virus polyproteins containing the non-structural proteinase. Evidence for temporal regulation of polyprotein processing in vivo.</title>
        <authorList>
            <person name="de Groot R.J."/>
            <person name="Hardy W.R."/>
            <person name="Shirako Y."/>
            <person name="Strauss J.H."/>
        </authorList>
    </citation>
    <scope>PROTEOLYTIC CLEAVAGE (POLYPROTEIN P1234)</scope>
    <scope>PROTEOLYTIC CLEAVAGE (POLYPROTEIN P123)</scope>
</reference>
<reference key="10">
    <citation type="journal article" date="1991" name="Proc. Natl. Acad. Sci. U.S.A.">
        <title>Sindbis virus RNA polymerase is degraded by the N-end rule pathway.</title>
        <authorList>
            <person name="de Groot R.J."/>
            <person name="Ruemenapf T."/>
            <person name="Kuhn R.J."/>
            <person name="Strauss E.G."/>
            <person name="Strauss J.H."/>
        </authorList>
    </citation>
    <scope>UBIQUITINATION (RNA-DIRECTED RNA POLYMERASE NSP4)</scope>
</reference>
<reference key="11">
    <citation type="journal article" date="1991" name="J. Virol.">
        <title>Sindbis virus nsP1 functions in negative-strand RNA synthesis.</title>
        <authorList>
            <person name="Wang Y.F."/>
            <person name="Sawicki S.G."/>
            <person name="Sawicki D.L."/>
        </authorList>
    </citation>
    <scope>FUNCTION (MRNA-CAPPING ENZYME NSP1)</scope>
</reference>
<reference key="12">
    <citation type="journal article" date="1992" name="Virology">
        <title>Identification of the active site residues in the nsP2 proteinase of Sindbis virus.</title>
        <authorList>
            <person name="Strauss E.G."/>
            <person name="De Groot R.J."/>
            <person name="Levinson R."/>
            <person name="Strauss J.H."/>
        </authorList>
    </citation>
    <scope>MUTAGENESIS OF CYS-1021; HIS-1098 AND TRP-1099</scope>
</reference>
<reference key="13">
    <citation type="journal article" date="1994" name="EMBO J.">
        <title>Polypeptide requirements for assembly of functional Sindbis virus replication complexes: a model for the temporal regulation of minus- and plus-strand RNA synthesis.</title>
        <authorList>
            <person name="Lemm J.A."/>
            <person name="Ruemenapf T."/>
            <person name="Strauss E.G."/>
            <person name="Strauss J.H."/>
            <person name="Rice C.M."/>
        </authorList>
    </citation>
    <scope>FUNCTION (RNA-DIRECTED RNA POLYMERASE NSP4)</scope>
    <scope>FUNCTION (POLYPROTEIN P123)</scope>
    <scope>PROTEOLYTIC CLEAVAGE (POLYPROTEIN P1234)</scope>
</reference>
<reference key="14">
    <citation type="journal article" date="1994" name="J. Virol.">
        <title>Genetic analysis of the nsP3 region of Sindbis virus: evidence for roles in minus-strand and subgenomic RNA synthesis.</title>
        <authorList>
            <person name="LaStarza M.W."/>
            <person name="Lemm J.A."/>
            <person name="Rice C.M."/>
        </authorList>
    </citation>
    <scope>FUNCTION (NON-STRUCTURAL PROTEIN 3)</scope>
</reference>
<reference key="15">
    <citation type="journal article" date="1994" name="J. Virol.">
        <title>Regulation of Sindbis virus RNA replication: uncleaved P123 and nsP4 function in minus-strand RNA synthesis, whereas cleaved products from P123 are required for efficient plus-strand RNA synthesis.</title>
        <authorList>
            <person name="Shirako Y."/>
            <person name="Strauss J.H."/>
        </authorList>
    </citation>
    <scope>FUNCTION (RNA-DIRECTED RNA POLYMERASE NSP4)</scope>
    <scope>FUNCTION (POLYPROTEIN P123)</scope>
    <scope>PROTEOLYTIC CLEAVAGE (POLYPROTEIN P123)</scope>
    <scope>PROTEOLYTIC CLEAVAGE (POLYPROTEIN P1234)</scope>
</reference>
<reference key="16">
    <citation type="journal article" date="1995" name="Proc. Natl. Acad. Sci. U.S.A.">
        <title>Reaction in alphavirus mRNA capping: formation of a covalent complex of nonstructural protein nsP1 with 7-methyl-GMP.</title>
        <authorList>
            <person name="Ahola T."/>
            <person name="Kaeaeriaeinen L."/>
        </authorList>
    </citation>
    <scope>FUNCTION (MRNA-CAPPING ENZYME NSP1)</scope>
    <scope>CATALYTIC ACTIVITY (MRNA-CAPPING ENZYME NSP1)</scope>
</reference>
<reference key="17">
    <citation type="journal article" date="1996" name="J. Virol.">
        <title>Sindbis virus RNA-negative mutants that fail to convert from minus-strand to plus-strand synthesis: role of the nsP2 protein.</title>
        <authorList>
            <person name="De I."/>
            <person name="Sawicki S.G."/>
            <person name="Sawicki D.L."/>
        </authorList>
    </citation>
    <scope>FUNCTION (PROTEASE NSP2)</scope>
    <scope>MUTAGENESIS OF GLU-703; VAL-815 AND LEU-956</scope>
</reference>
<reference key="18">
    <citation type="journal article" date="1996" name="Virology">
        <title>Mutagenesis of the Sindbis virus nsP1 protein: effects on methyltransferase activity and viral infectivity.</title>
        <authorList>
            <person name="Wang H.-L."/>
            <person name="O'Rear J."/>
            <person name="Stollar V."/>
        </authorList>
    </citation>
    <scope>MUTAGENESIS OF HIS-39; HIS-81; ASP-91; ARG-94; TYR-249 AND ILE-369</scope>
</reference>
<reference key="19">
    <citation type="journal article" date="1998" name="J. Virol.">
        <title>Requirement for an aromatic amino acid or histidine at the N-terminus of Sindbis virus RNA polymerase.</title>
        <authorList>
            <person name="Shirako Y."/>
            <person name="Strauss J.H."/>
        </authorList>
    </citation>
    <scope>MUTAGENESIS OF TYR-1904</scope>
</reference>
<reference key="20">
    <citation type="journal article" date="2000" name="J. Virol.">
        <title>Effects of palmitoylation of replicase protein nsP1 on alphavirus infection.</title>
        <authorList>
            <person name="Ahola T."/>
            <person name="Kujala P."/>
            <person name="Tuittila M."/>
            <person name="Blom T."/>
            <person name="Laakkonen P."/>
            <person name="Hinkkanen A."/>
            <person name="Auvinen P."/>
        </authorList>
    </citation>
    <scope>PALMITOYLATION AT CYS-420</scope>
    <scope>MUTAGENESIS OF CYS-420</scope>
</reference>
<reference key="21">
    <citation type="journal article" date="2006" name="Genes Dev.">
        <title>Translational resistance of late alphavirus mRNA to eIF2alpha phosphorylation: a strategy to overcome the antiviral effect of protein kinase PKR.</title>
        <authorList>
            <person name="Ventoso I."/>
            <person name="Sanz M.A."/>
            <person name="Molina S."/>
            <person name="Berlanga J.J."/>
            <person name="Carrasco L."/>
            <person name="Esteban M."/>
        </authorList>
    </citation>
    <scope>TRANSLATION SHUTOFF</scope>
</reference>
<reference key="22">
    <citation type="journal article" date="2006" name="J. Virol.">
        <title>Formation of nsP3-specific protein complexes during Sindbis virus replication.</title>
        <authorList>
            <person name="Frolova E."/>
            <person name="Gorchakov R."/>
            <person name="Garmashova N."/>
            <person name="Atasheva S."/>
            <person name="Vergara L.A."/>
            <person name="Frolov I."/>
        </authorList>
    </citation>
    <scope>SUBCELLULAR LOCATION (NON-STRUCTURAL PROTEIN 3)</scope>
</reference>
<reference key="23">
    <citation type="journal article" date="2006" name="J. Virol.">
        <title>Catalytic core of alphavirus nonstructural protein nsP4 possesses terminal adenylyltransferase activity.</title>
        <authorList>
            <person name="Tomar S."/>
            <person name="Hardy R.W."/>
            <person name="Smith J.L."/>
            <person name="Kuhn R.J."/>
        </authorList>
    </citation>
    <scope>FUNCTION (RNA-DIRECTED RNA POLYMERASE NSP4)</scope>
    <scope>COFACTOR (RNA-DIRECTED RNA POLYMERASE NSP4)</scope>
    <scope>BIOPHYSICOCHEMICAL PROPERTIES (RNA-DIRECTED RNA POLYMERASE NSP4)</scope>
    <scope>CATALYTIC ACTIVITY (RNA-DIRECTED RNA POLYMERASE NSP4)</scope>
</reference>
<reference key="24">
    <citation type="journal article" date="2007" name="J. Virol.">
        <title>The Old World and New World alphaviruses use different virus-specific proteins for induction of transcriptional shutoff.</title>
        <authorList>
            <person name="Garmashova N."/>
            <person name="Gorchakov R."/>
            <person name="Volkova E."/>
            <person name="Paessler S."/>
            <person name="Frolova E."/>
            <person name="Frolov I."/>
        </authorList>
    </citation>
    <scope>FUNCTION (PROTEASE NSP2)</scope>
</reference>
<reference key="25">
    <citation type="journal article" date="2008" name="J. Virol.">
        <title>Different types of nsP3-containing protein complexes in Sindbis virus-infected cells.</title>
        <authorList>
            <person name="Gorchakov R."/>
            <person name="Garmashova N."/>
            <person name="Frolova E."/>
            <person name="Frolov I."/>
        </authorList>
    </citation>
    <scope>FUNCTION (NON-STRUCTURAL PROTEIN 3)</scope>
    <scope>INTERACTION WITH HOST G3BP1 (NON-STRUCTURAL PROTEIN 3)</scope>
    <scope>INTERACTION WITH HOST G3BP2 (NON-STRUCTURAL PROTEIN 3)</scope>
</reference>
<reference key="26">
    <citation type="journal article" date="2009" name="Virology">
        <title>Characterization of purified Sindbis virus nsP4 RNA-dependent RNA polymerase activity in vitro.</title>
        <authorList>
            <person name="Rubach J.K."/>
            <person name="Wasik B.R."/>
            <person name="Rupp J.C."/>
            <person name="Kuhn R.J."/>
            <person name="Hardy R.W."/>
            <person name="Smith J.L."/>
        </authorList>
    </citation>
    <scope>FUNCTION (RNA-DIRECTED RNA POLYMERASE NSP4)</scope>
    <scope>BIOPHYSICOCHEMICAL PROPERTIES (RNA-DIRECTED RNA POLYMERASE NSP4)</scope>
    <scope>CATALYTIC ACTIVITY (RNA-DIRECTED RNA POLYMERASE NSP4)</scope>
    <scope>MUTAGENESIS OF 2367-GLU-GLU-2368</scope>
    <scope>COFACTOR (RNA-DIRECTED RNA POLYMERASE NSP4)</scope>
</reference>
<reference key="27">
    <citation type="journal article" date="2012" name="J. Virol.">
        <title>Evasion of the innate immune response: the Old World alphavirus nsP2 protein induces rapid degradation of Rpb1, a catalytic subunit of RNA polymerase II.</title>
        <authorList>
            <person name="Akhrymuk I."/>
            <person name="Kulemzin S.V."/>
            <person name="Frolova E.I."/>
        </authorList>
    </citation>
    <scope>FUNCTION (PROTEASE NSP2)</scope>
    <scope>MUTAGENESIS OF PRO-1266</scope>
</reference>
<reference key="28">
    <citation type="journal article" date="2017" name="Sci. Rep.">
        <title>The conserved macrodomains of the non-structural proteins of Chikungunya virus and other pathogenic positive strand RNA viruses function as mono-ADP-ribosylhydrolases.</title>
        <authorList>
            <person name="Eckei L."/>
            <person name="Krieg S."/>
            <person name="Buetepage M."/>
            <person name="Lehmann A."/>
            <person name="Gross A."/>
            <person name="Lippok B."/>
            <person name="Grimm A.R."/>
            <person name="Kuemmerer B.M."/>
            <person name="Rossetti G."/>
            <person name="Luescher B."/>
            <person name="Verheugd P."/>
        </authorList>
    </citation>
    <scope>FUNCTION (NON-STRUCTURAL PROTEIN 3)</scope>
    <scope>DOMAIN (NON-STRUCTURAL PROTEIN 3)</scope>
    <scope>CATALYTIC ACTIVITY (NON-STRUCTURAL PROTEIN 3)</scope>
</reference>
<reference key="29">
    <citation type="journal article" date="2018" name="Viruses">
        <title>The regulation of translation in alphavirus-infected cells.</title>
        <authorList>
            <person name="Carrasco L."/>
            <person name="Sanz M.A."/>
            <person name="Gonzalez-Almela E."/>
        </authorList>
    </citation>
    <scope>REVIEW</scope>
</reference>
<reference key="30">
    <citation type="journal article" date="2018" name="J. Virol.">
        <title>Sindbis virus infection causes cell death by nsP2-induced transcriptional shutoff or by nsP3-dependent translational shutoff.</title>
        <authorList>
            <person name="Akhrymuk I."/>
            <person name="Frolov I."/>
            <person name="Frolova E.I."/>
        </authorList>
    </citation>
    <scope>FUNCTION (PROTEASE NSP2)</scope>
    <scope>MUTAGENESIS OF CYS-1040; PRO-1223; GLN-1224 AND PRO-1266</scope>
</reference>
<reference key="31">
    <citation type="journal article" date="2022" name="J. Virol.">
        <title>TMEMu45B Interacts with Sindbis Virus Nsp1 and Nsp4 and Inhibits Viral Replication.</title>
        <authorList>
            <person name="Yan F."/>
            <person name="Yang W."/>
            <person name="Wang X."/>
            <person name="Gao G."/>
        </authorList>
    </citation>
    <scope>INTERACTION WITH HOST TMEM45B (NON-STRUCTURAL PROTEIN 1)</scope>
    <scope>INTERACTION WITH HOST TMEM45B (NON-STRUCTURAL PROTEIN 4)</scope>
</reference>
<reference evidence="52" key="32">
    <citation type="journal article" date="2012" name="Proc. Natl. Acad. Sci. U.S.A.">
        <title>Structural and functional insights into alphavirus polyprotein processing and pathogenesis.</title>
        <authorList>
            <person name="Shin G."/>
            <person name="Yost S.A."/>
            <person name="Miller M.T."/>
            <person name="Elrod E.J."/>
            <person name="Grakoui A."/>
            <person name="Marcotrigiano J."/>
        </authorList>
    </citation>
    <scope>X-RAY CRYSTALLOGRAPHY (2.85 ANGSTROMS) OF 1011-1675 IN COMPLEX WITH ZINC</scope>
    <scope>DOMAIN (NON-STRUCTURAL PROTEIN 3)</scope>
    <scope>MUTAGENESIS OF CYS-1610; CYS-1612; CYS-1635 AND CYS-1653</scope>
</reference>
<sequence length="2513" mass="279661">MEKPVVNVDVDPQSPFVVQLQKSFPQFEVVAQQVTPNDHANARAFSHLASKLIELEVPTTATILDIGSAPARRMFSEHQYHCVCPMRSPEDPDRMMKYASKLAEKACKITNKNLHEKIKDLRTVLDTPDAETPSLCFHNDVTCNMRAEYSVMQDVYINAPGTIYHQAMKGVRTLYWIGFDTTQFMFSAMAGSYPAYNTNWADEKVLEARNIGLCSTKLSEGRTGKLSIMRKKELKPGSRVYFSVGSTLYPEHRASLQSWHLPSVFHLNGKQSYTCRCDTVVSCEGYVVKKITISPGITGETVGYAVTHNSEGFLLCKVTDTVKGERVSFPVCTYIPATICDQMTGIMATDISPDDAQKLLVGLNQRIVINGRTNRNTNTMQNYLLPIIAQGFSKWAKERKDDLDNEKMLGTRERKLTYGCLWAFRTKKVHSFYRPPGTQTCVKVPASFSAFPMSSVWTTSLPMSLRQKLKLALQPKKEEKLLQVSEELVMEAKAAFEDAQEEARAEKLREALPPLVADKGIEAAAEVVCEVEGLQADIGAALVETPRGHVRIIPQANDRMIGQYIVVSPNSVLKNAKLAPAHPLADQVKIITHSGRSGRYAVEPYDAKVLMPAGGAVPWPEFLALSESATLVYNEREFVNRKLYHIAMHGPAKNTEEEQYKVTKAELAETEYVFDVDKKRCVKKEEASGLVLSGELTNPPYHELALEGLKTRPAVPYKVETIGVIGTPGSGKSAIIKSTVTARDLVTSGKKENCREIEADVLRLRGMQITSKTVDSVMLNGCHKAVEVLYVDEAFACHAGALLALIAIVRPRKKVVLCGDPMQCGFFNMMQLKVHFNHPEKDICTKTFYKYISRRCTQPVTAIVSTLHYDGKMKTTNPCKKNIEIDITGATKPKPGDIILTCFRGWVKQLQIDYPGHEVMTAAASQGLTRKGVYAVRQKVNENPLYAITSEHVNVLLTRTEDRLVWKTLQGDPWIKQPTNIPKGNFQATIEDWEAEHKGIIAAINSPTPRANPFSCKTNVCWAKALEPILATAGIVLTGCQWSELFPQFADDKPHSAIYALDVICIKFFGMDLTSGLFSKQSIPLTYHPADSARPVAHWDNSPGTRKYGYDHAIAAELSRRFPVFQLAGKGTQLDLQTGRTRVISAQHNLVPVNRNLPHALVPEYKEKQPGPVKKFLNQFKHHSVLVVSEEKIEAPRKRIEWIAPIGIAGADKNYNLAFGFPPQARYDLVFINIGTKYRNHHFQQCEDHAATLKTLSRSALNCLNPGGTLVVKSYGYADRNSEDVVTALARKFVRVSAARPDCVSSNTEMYLIFRQLDNSRTRQFTPHHLNCVISSVYEGTRDGVGAAPSYRTKRENIADCQEEAVVNAANPLGRPGEGVCRAIYKRWPTSFTDSATETGTARMTVCLGKKVIHAVGPDFRKHPEAEALKLLQNAYHAVADLVNEHNIKSVAIPLLSTGIYAAGKDRLEVSLNCLTTALDRTDADVTIYCLDKKWKERIDAALQLKESVTELKDEDMEIDDELVWIHPDSCLKGRKGFSTTKGKLYSYFEGTKFHQAAKDMAEIKVLFPNDQESNEQLCAYILGETMEAIREKCPVDHNPSSSPPKTLPCLCMYAMTPERVHRLRSNNVKEVTVCSSTPLPKHKIKNVQKVQCTKVVLFNPHTPAFVPARKYIEVPEQPTAPPAQAEEAPEVVATPSPSTADNTSLDVTDISLDMDDSSEGSLFSSFSGSDNSITSMDSWSSGPSSLEIVDRRQVVVADVHAVQEPAPIPPPRLKKMARLAAARKEPTPPASNSSESLHLSFGGVSMSLGSIFDGETARQAAVQPLATGPTDVPMSFGSFSDGEIDELSRRVTESEPVLFGSFEPGEVNSIISSRSAVSFPLRKQRRRRRSRRTEYXLTGVGGYIFSTDTGPGHLQKKSVLQNQLTEPTLERNVLERIHAPVLDTSKEEQLKLRYQMMPTEANKSRYQSRKVENQKAITTERLLSGLRLYNSATDQPECYKITYPKPLYSSSVPANYSDPQFAVAVCNNYLHENYPTVASYQITDEYDAYLDMVDGTVACLDTATFCPAKLRSYPKKHEYRAPNIRSAVPSAMQNTLQNVLIAATKRNCNVTQMRELPTLDSATFNVECFRKYACNDEYWEEFARKPIRITTEFVTAYVARLKGPKAAALFAKTYNLVPLQEVPMDRFVMDMKRDVKVTPGTKHTEERPKVQVIQAAEPLATAYLCGIHRELVRRLTAVLLPNIHTLFDMSAEDFDAIIAEHFKQGDPVLETDIASFDKSQDDAMALTGLMILEDLGVDQPLLDLIECAFGEISSTHLPTGTRFKFGAMMKSGMFLTLFVNTVLNVVIASRVLEERLKTSRCAAFIGDDNIIHGVVSDKEMAERCATWLNMEVKIIDAVIGERPPYFCGGFILQDSVTSTACRVADPLKRLFKLGKPLPADDEQDEDRRRALLDETKAWFRVGITGTLAVAVTTRYEVDNITPVLLALRTFAQSKRAFQAIRGEIKHLYGGPK</sequence>
<proteinExistence type="evidence at protein level"/>
<name>POLN_SINDV</name>
<feature type="chain" id="PRO_0000308405" description="Polyprotein P1234">
    <location>
        <begin position="1"/>
        <end position="2513"/>
    </location>
</feature>
<feature type="chain" id="PRO_0000227771" description="Polyprotein P123'">
    <location>
        <begin position="1"/>
        <end position="1903"/>
    </location>
</feature>
<feature type="chain" id="PRO_0000227772" description="Polyprotein P123">
    <location>
        <begin position="1"/>
        <end position="1896"/>
    </location>
</feature>
<feature type="chain" id="PRO_0000041236" description="mRNA-capping enzyme nsP1">
    <location>
        <begin position="1"/>
        <end position="540"/>
    </location>
</feature>
<feature type="chain" id="PRO_0000041237" description="Protease nsP2">
    <location>
        <begin position="541"/>
        <end position="1347"/>
    </location>
</feature>
<feature type="chain" id="PRO_0000041238" description="Non-structural protein 3'">
    <location>
        <begin position="1348"/>
        <end position="1903"/>
    </location>
</feature>
<feature type="chain" id="PRO_0000227773" description="Non-structural protein 3">
    <location>
        <begin position="1348"/>
        <end position="1896"/>
    </location>
</feature>
<feature type="chain" id="PRO_0000041239" description="RNA-directed RNA polymerase nsP4">
    <location>
        <begin position="1904"/>
        <end position="2513"/>
    </location>
</feature>
<feature type="domain" description="Alphavirus-like MT" evidence="9">
    <location>
        <begin position="30"/>
        <end position="260"/>
    </location>
</feature>
<feature type="domain" description="(+)RNA virus helicase ATP-binding" evidence="8">
    <location>
        <begin position="695"/>
        <end position="850"/>
    </location>
</feature>
<feature type="domain" description="(+)RNA virus helicase C-terminal" evidence="8">
    <location>
        <begin position="851"/>
        <end position="999"/>
    </location>
</feature>
<feature type="domain" description="Peptidase C9" evidence="7">
    <location>
        <begin position="1012"/>
        <end position="1341"/>
    </location>
</feature>
<feature type="domain" description="Macro" evidence="5">
    <location>
        <begin position="1348"/>
        <end position="1507"/>
    </location>
</feature>
<feature type="domain" description="RdRp catalytic" evidence="6">
    <location>
        <begin position="2267"/>
        <end position="2382"/>
    </location>
</feature>
<feature type="region of interest" description="NsP1 membrane-binding" evidence="2">
    <location>
        <begin position="245"/>
        <end position="264"/>
    </location>
</feature>
<feature type="region of interest" description="Nucleolus localization signal" evidence="2">
    <location>
        <begin position="1013"/>
        <end position="1032"/>
    </location>
</feature>
<feature type="region of interest" description="Disordered" evidence="10">
    <location>
        <begin position="1679"/>
        <end position="1705"/>
    </location>
</feature>
<feature type="short sequence motif" description="Nuclear export signal" evidence="3">
    <location>
        <begin position="1066"/>
        <end position="1075"/>
    </location>
</feature>
<feature type="short sequence motif" description="Nuclear localization signal" evidence="2">
    <location>
        <begin position="1196"/>
        <end position="1200"/>
    </location>
</feature>
<feature type="short sequence motif" description="FGDF; binding to host G3BP1" evidence="2">
    <location>
        <begin position="1837"/>
        <end position="1840"/>
    </location>
</feature>
<feature type="short sequence motif" description="FGDF; binding to host G3BP1" evidence="2">
    <location>
        <begin position="1860"/>
        <end position="1863"/>
    </location>
</feature>
<feature type="compositionally biased region" description="Low complexity" evidence="10">
    <location>
        <begin position="1679"/>
        <end position="1696"/>
    </location>
</feature>
<feature type="active site" description="For cysteine protease nsP2 activity" evidence="7">
    <location>
        <position position="1021"/>
    </location>
</feature>
<feature type="active site" description="For cysteine protease nsP2 activity" evidence="7">
    <location>
        <position position="1098"/>
    </location>
</feature>
<feature type="binding site" evidence="8">
    <location>
        <begin position="726"/>
        <end position="733"/>
    </location>
    <ligand>
        <name>a ribonucleoside 5'-triphosphate</name>
        <dbReference type="ChEBI" id="CHEBI:61557"/>
    </ligand>
</feature>
<feature type="binding site" evidence="4">
    <location>
        <position position="1371"/>
    </location>
    <ligand>
        <name>ADP-D-ribose</name>
        <dbReference type="ChEBI" id="CHEBI:57967"/>
    </ligand>
</feature>
<feature type="binding site" evidence="4">
    <location>
        <position position="1379"/>
    </location>
    <ligand>
        <name>ADP-D-ribose</name>
        <dbReference type="ChEBI" id="CHEBI:57967"/>
    </ligand>
</feature>
<feature type="binding site" evidence="4">
    <location>
        <position position="1459"/>
    </location>
    <ligand>
        <name>ADP-D-ribose</name>
        <dbReference type="ChEBI" id="CHEBI:57967"/>
    </ligand>
</feature>
<feature type="binding site" evidence="4">
    <location>
        <position position="1460"/>
    </location>
    <ligand>
        <name>ADP-D-ribose</name>
        <dbReference type="ChEBI" id="CHEBI:57967"/>
    </ligand>
</feature>
<feature type="binding site" evidence="4">
    <location>
        <position position="1461"/>
    </location>
    <ligand>
        <name>ADP-D-ribose</name>
        <dbReference type="ChEBI" id="CHEBI:57967"/>
    </ligand>
</feature>
<feature type="binding site" evidence="24">
    <location>
        <position position="1610"/>
    </location>
    <ligand>
        <name>Zn(2+)</name>
        <dbReference type="ChEBI" id="CHEBI:29105"/>
    </ligand>
</feature>
<feature type="binding site" evidence="24">
    <location>
        <position position="1612"/>
    </location>
    <ligand>
        <name>Zn(2+)</name>
        <dbReference type="ChEBI" id="CHEBI:29105"/>
    </ligand>
</feature>
<feature type="binding site" evidence="24">
    <location>
        <position position="1635"/>
    </location>
    <ligand>
        <name>Zn(2+)</name>
        <dbReference type="ChEBI" id="CHEBI:29105"/>
    </ligand>
</feature>
<feature type="binding site" evidence="24">
    <location>
        <position position="1653"/>
    </location>
    <ligand>
        <name>Zn(2+)</name>
        <dbReference type="ChEBI" id="CHEBI:29105"/>
    </ligand>
</feature>
<feature type="site" description="Involved in the phosphoramide link with 7-methyl-GMP" evidence="3">
    <location>
        <position position="39"/>
    </location>
</feature>
<feature type="site" description="Cleavage; by protease nsP2" evidence="21">
    <location>
        <begin position="540"/>
        <end position="541"/>
    </location>
</feature>
<feature type="site" description="Cleavage; by protease nsP2" evidence="21">
    <location>
        <begin position="1347"/>
        <end position="1348"/>
    </location>
</feature>
<feature type="site" description="Cleavage; by protease nsP2" evidence="4">
    <location>
        <begin position="1903"/>
        <end position="1904"/>
    </location>
</feature>
<feature type="lipid moiety-binding region" description="S-palmitoyl cysteine; by host" evidence="11">
    <location>
        <position position="420"/>
    </location>
</feature>
<feature type="mutagenesis site" description="Complete loss of methyl transferase activity or viral infectivity." evidence="34">
    <original>H</original>
    <variation>A</variation>
    <location>
        <position position="39"/>
    </location>
</feature>
<feature type="mutagenesis site" description="Complete loss of methyl transferase activity or viral infectivity." evidence="34">
    <original>H</original>
    <variation>A</variation>
    <location>
        <position position="81"/>
    </location>
</feature>
<feature type="mutagenesis site" description="Complete loss of methyl transferase activity or viral infectivity." evidence="34">
    <original>D</original>
    <variation>A</variation>
    <location>
        <position position="91"/>
    </location>
</feature>
<feature type="mutagenesis site" description="Complete loss of methyl transferase activity or viral infectivity." evidence="34">
    <original>R</original>
    <variation>A</variation>
    <location>
        <position position="94"/>
    </location>
</feature>
<feature type="mutagenesis site" description="Complete loss of methyl transferase activity or viral infectivity." evidence="34">
    <original>Y</original>
    <variation>A</variation>
    <location>
        <position position="249"/>
    </location>
</feature>
<feature type="mutagenesis site" description="No effect on methyl transferase activity or viral infectivity." evidence="34">
    <original>I</original>
    <variation>V</variation>
    <location>
        <position position="369"/>
    </location>
</feature>
<feature type="mutagenesis site" description="Complete loss of palmitoylation." evidence="11">
    <original>C</original>
    <variation>A</variation>
    <location>
        <position position="420"/>
    </location>
</feature>
<feature type="mutagenesis site" description="Partial loss of polyprotein processing between nsp1 and nsp2." evidence="21">
    <original>G</original>
    <variation>A</variation>
    <location>
        <position position="539"/>
    </location>
</feature>
<feature type="mutagenesis site" description="Complete loss of polyprotein processing between nsp1 and nsp2." evidence="21">
    <original>G</original>
    <variation>E</variation>
    <variation>V</variation>
    <location>
        <position position="539"/>
    </location>
</feature>
<feature type="mutagenesis site" description="No effect on the synthesis and processing of the polyproteins; blocks the conversion of the initial, short-lived minus-strand replicase complex (RCinitial) into the mature replicase and transcriptase complexes." evidence="35">
    <original>E</original>
    <variation>K</variation>
    <location>
        <position position="703"/>
    </location>
</feature>
<feature type="mutagenesis site" description="No effect on the synthesis and processing of the polyproteins; blocks the conversion of the initial, short-lived minus-strand replicase complex (RCinitial) into the mature replicase and transcriptase complexes." evidence="35">
    <original>V</original>
    <variation>I</variation>
    <location>
        <position position="815"/>
    </location>
</feature>
<feature type="mutagenesis site" description="No effect on the synthesis and processing of the polyproteins; blocks the conversion of the initial, short-lived minus-strand replicase complex (RCinitial) into the mature replicase and transcriptase complexes." evidence="35">
    <original>L</original>
    <variation>S</variation>
    <location>
        <position position="956"/>
    </location>
</feature>
<feature type="mutagenesis site" description="Complete loss of nsP2 protease activity." evidence="12">
    <original>C</original>
    <variation>A</variation>
    <location>
        <position position="1021"/>
    </location>
</feature>
<feature type="mutagenesis site" description="NsP2 is only found in the nucleus." evidence="28">
    <original>C</original>
    <variation>W</variation>
    <location>
        <position position="1040"/>
    </location>
</feature>
<feature type="mutagenesis site" description="Complete loss of nsP2 protease activity." evidence="12">
    <original>H</original>
    <variation>A</variation>
    <location>
        <position position="1098"/>
    </location>
</feature>
<feature type="mutagenesis site" description="Complete loss of nsP2 protease activity." evidence="12">
    <original>W</original>
    <variation>A</variation>
    <location>
        <position position="1099"/>
    </location>
</feature>
<feature type="mutagenesis site" description="Complete loss of nsP2-induced degradation of host POLR2A; no effect on nsP2 localization." evidence="28">
    <original>H</original>
    <variation>Q</variation>
    <location>
        <position position="1159"/>
    </location>
</feature>
<feature type="mutagenesis site" description="Complete loss of nsP2-induced degradation of host POLR2A; no effect on nsP2 localization." evidence="28">
    <original>H</original>
    <variation>Q</variation>
    <location>
        <position position="1183"/>
    </location>
</feature>
<feature type="mutagenesis site" description="NsP2 is only found in the nucleus." evidence="28">
    <original>P</original>
    <variation>Q</variation>
    <location>
        <position position="1223"/>
    </location>
</feature>
<feature type="mutagenesis site" description="Complete loss of nsP2-induced degradation of host POLR2A; NsP2 is only found in the nucleus." evidence="28">
    <original>Q</original>
    <variation>P</variation>
    <location>
        <position position="1224"/>
    </location>
</feature>
<feature type="mutagenesis site" description="Complete loss of nsP2-induced degradation of host POLR2A, nsP2 is only found in the nucleus,." evidence="23 28">
    <original>P</original>
    <variation>G</variation>
    <variation>L</variation>
    <location>
        <position position="1266"/>
    </location>
</feature>
<feature type="mutagenesis site" description="Partial loss of polyprotein processing between nsp2 and nsp3." evidence="21">
    <original>G</original>
    <variation>A</variation>
    <location>
        <position position="1346"/>
    </location>
</feature>
<feature type="mutagenesis site" description="Complete loss of polyprotein processing between nsp2 and nsp3." evidence="21">
    <original>G</original>
    <variation>E</variation>
    <variation>V</variation>
    <location>
        <position position="1346"/>
    </location>
</feature>
<feature type="mutagenesis site" description="Complete loss of viral replication." evidence="24">
    <original>C</original>
    <variation>A</variation>
    <location>
        <position position="1610"/>
    </location>
</feature>
<feature type="mutagenesis site" description="Complete loss of viral replication." evidence="24">
    <original>C</original>
    <variation>A</variation>
    <location>
        <position position="1612"/>
    </location>
</feature>
<feature type="mutagenesis site" description="Complete loss of viral replication." evidence="24">
    <original>C</original>
    <variation>A</variation>
    <location>
        <position position="1635"/>
    </location>
</feature>
<feature type="mutagenesis site" description="Complete loss of viral replication." evidence="24">
    <original>C</original>
    <variation>A</variation>
    <location>
        <position position="1653"/>
    </location>
</feature>
<feature type="mutagenesis site" description="Reduces RNA synthesis in early phase of infection." evidence="25">
    <original>Y</original>
    <variation>YR</variation>
    <variation>YS</variation>
    <variation>YW</variation>
    <location>
        <position position="1896"/>
    </location>
</feature>
<feature type="mutagenesis site" description="No effect on nsP4 cleavage." evidence="36">
    <original>Y</original>
    <variation>A</variation>
    <location>
        <position position="1904"/>
    </location>
</feature>
<feature type="mutagenesis site" description="Destabilizes nsP4." evidence="36">
    <original>Y</original>
    <variation>C</variation>
    <location>
        <position position="1904"/>
    </location>
</feature>
<feature type="mutagenesis site" description="Reduces nsP4 cleavage." evidence="36">
    <original>Y</original>
    <variation>E</variation>
    <location>
        <position position="1904"/>
    </location>
</feature>
<feature type="mutagenesis site" description="Destabilizes nsP4." evidence="36">
    <original>Y</original>
    <variation>F</variation>
    <location>
        <position position="1904"/>
    </location>
</feature>
<feature type="mutagenesis site" description="Reduces nsP4 cleavage and destabilizes nsP4." evidence="36">
    <original>Y</original>
    <variation>L</variation>
    <location>
        <position position="1904"/>
    </location>
</feature>
<feature type="mutagenesis site" description="Reduces nsP4 cleavage." evidence="36">
    <original>Y</original>
    <variation>M</variation>
    <location>
        <position position="1904"/>
    </location>
</feature>
<feature type="mutagenesis site" description="Reduces nsP4 cleavage." evidence="36">
    <original>Y</original>
    <variation>N</variation>
    <location>
        <position position="1904"/>
    </location>
</feature>
<feature type="mutagenesis site" description="Complete loss of nsP4 cleavage." evidence="36">
    <original>Y</original>
    <variation>P</variation>
    <location>
        <position position="1904"/>
    </location>
</feature>
<feature type="mutagenesis site" description="Reduces nsP4 cleavage." evidence="36">
    <original>Y</original>
    <variation>Q</variation>
    <location>
        <position position="1904"/>
    </location>
</feature>
<feature type="mutagenesis site" description="Destabilizes nsP4." evidence="36">
    <original>Y</original>
    <variation>R</variation>
    <location>
        <position position="1904"/>
    </location>
</feature>
<feature type="mutagenesis site" description="Reduces nsP4 cleavage." evidence="36">
    <original>Y</original>
    <variation>T</variation>
    <location>
        <position position="1904"/>
    </location>
</feature>
<feature type="mutagenesis site" description="Complete loss of RNA-directed RNA polymerase activity." evidence="19">
    <original>DD</original>
    <variation>AA</variation>
    <location>
        <begin position="2368"/>
        <end position="2369"/>
    </location>
</feature>
<feature type="turn" evidence="53">
    <location>
        <begin position="1013"/>
        <end position="1016"/>
    </location>
</feature>
<feature type="helix" evidence="53">
    <location>
        <begin position="1021"/>
        <end position="1032"/>
    </location>
</feature>
<feature type="helix" evidence="53">
    <location>
        <begin position="1039"/>
        <end position="1045"/>
    </location>
</feature>
<feature type="helix" evidence="53">
    <location>
        <begin position="1047"/>
        <end position="1050"/>
    </location>
</feature>
<feature type="helix" evidence="53">
    <location>
        <begin position="1057"/>
        <end position="1069"/>
    </location>
</feature>
<feature type="helix" evidence="53">
    <location>
        <begin position="1073"/>
        <end position="1075"/>
    </location>
</feature>
<feature type="strand" evidence="53">
    <location>
        <begin position="1079"/>
        <end position="1081"/>
    </location>
</feature>
<feature type="strand" evidence="53">
    <location>
        <begin position="1086"/>
        <end position="1088"/>
    </location>
</feature>
<feature type="strand" evidence="53">
    <location>
        <begin position="1098"/>
        <end position="1100"/>
    </location>
</feature>
<feature type="strand" evidence="53">
    <location>
        <begin position="1107"/>
        <end position="1109"/>
    </location>
</feature>
<feature type="helix" evidence="53">
    <location>
        <begin position="1112"/>
        <end position="1118"/>
    </location>
</feature>
<feature type="turn" evidence="53">
    <location>
        <begin position="1119"/>
        <end position="1121"/>
    </location>
</feature>
<feature type="helix" evidence="53">
    <location>
        <begin position="1124"/>
        <end position="1127"/>
    </location>
</feature>
<feature type="turn" evidence="53">
    <location>
        <begin position="1136"/>
        <end position="1138"/>
    </location>
</feature>
<feature type="strand" evidence="53">
    <location>
        <begin position="1141"/>
        <end position="1143"/>
    </location>
</feature>
<feature type="strand" evidence="53">
    <location>
        <begin position="1155"/>
        <end position="1159"/>
    </location>
</feature>
<feature type="helix" evidence="53">
    <location>
        <begin position="1174"/>
        <end position="1177"/>
    </location>
</feature>
<feature type="strand" evidence="53">
    <location>
        <begin position="1183"/>
        <end position="1188"/>
    </location>
</feature>
<feature type="strand" evidence="53">
    <location>
        <begin position="1198"/>
        <end position="1204"/>
    </location>
</feature>
<feature type="strand" evidence="53">
    <location>
        <begin position="1212"/>
        <end position="1214"/>
    </location>
</feature>
<feature type="helix" evidence="53">
    <location>
        <begin position="1217"/>
        <end position="1219"/>
    </location>
</feature>
<feature type="strand" evidence="53">
    <location>
        <begin position="1227"/>
        <end position="1232"/>
    </location>
</feature>
<feature type="helix" evidence="53">
    <location>
        <begin position="1242"/>
        <end position="1262"/>
    </location>
</feature>
<feature type="strand" evidence="53">
    <location>
        <begin position="1264"/>
        <end position="1275"/>
    </location>
</feature>
<feature type="helix" evidence="53">
    <location>
        <begin position="1280"/>
        <end position="1291"/>
    </location>
</feature>
<feature type="strand" evidence="53">
    <location>
        <begin position="1293"/>
        <end position="1299"/>
    </location>
</feature>
<feature type="strand" evidence="53">
    <location>
        <begin position="1310"/>
        <end position="1317"/>
    </location>
</feature>
<feature type="helix" evidence="53">
    <location>
        <begin position="1328"/>
        <end position="1338"/>
    </location>
</feature>
<feature type="strand" evidence="53">
    <location>
        <begin position="1351"/>
        <end position="1354"/>
    </location>
</feature>
<feature type="helix" evidence="53">
    <location>
        <begin position="1358"/>
        <end position="1360"/>
    </location>
</feature>
<feature type="strand" evidence="53">
    <location>
        <begin position="1363"/>
        <end position="1369"/>
    </location>
</feature>
<feature type="helix" evidence="53">
    <location>
        <begin position="1380"/>
        <end position="1387"/>
    </location>
</feature>
<feature type="helix" evidence="53">
    <location>
        <begin position="1389"/>
        <end position="1392"/>
    </location>
</feature>
<feature type="strand" evidence="53">
    <location>
        <begin position="1402"/>
        <end position="1407"/>
    </location>
</feature>
<feature type="strand" evidence="53">
    <location>
        <begin position="1410"/>
        <end position="1415"/>
    </location>
</feature>
<feature type="helix" evidence="53">
    <location>
        <begin position="1425"/>
        <end position="1445"/>
    </location>
</feature>
<feature type="strand" evidence="53">
    <location>
        <begin position="1449"/>
        <end position="1453"/>
    </location>
</feature>
<feature type="strand" evidence="53">
    <location>
        <begin position="1458"/>
        <end position="1460"/>
    </location>
</feature>
<feature type="turn" evidence="53">
    <location>
        <begin position="1461"/>
        <end position="1464"/>
    </location>
</feature>
<feature type="helix" evidence="53">
    <location>
        <begin position="1468"/>
        <end position="1479"/>
    </location>
</feature>
<feature type="strand" evidence="53">
    <location>
        <begin position="1485"/>
        <end position="1489"/>
    </location>
</feature>
<feature type="helix" evidence="53">
    <location>
        <begin position="1493"/>
        <end position="1507"/>
    </location>
</feature>
<feature type="turn" evidence="53">
    <location>
        <begin position="1531"/>
        <end position="1534"/>
    </location>
</feature>
<feature type="strand" evidence="53">
    <location>
        <begin position="1538"/>
        <end position="1541"/>
    </location>
</feature>
<feature type="strand" evidence="53">
    <location>
        <begin position="1543"/>
        <end position="1546"/>
    </location>
</feature>
<feature type="helix" evidence="53">
    <location>
        <begin position="1555"/>
        <end position="1567"/>
    </location>
</feature>
<feature type="helix" evidence="53">
    <location>
        <begin position="1571"/>
        <end position="1582"/>
    </location>
</feature>
<feature type="helix" evidence="53">
    <location>
        <begin position="1588"/>
        <end position="1593"/>
    </location>
</feature>
<feature type="strand" evidence="53">
    <location>
        <begin position="1609"/>
        <end position="1612"/>
    </location>
</feature>
<feature type="helix" evidence="53">
    <location>
        <begin position="1618"/>
        <end position="1626"/>
    </location>
</feature>
<feature type="strand" evidence="53">
    <location>
        <begin position="1632"/>
        <end position="1634"/>
    </location>
</feature>
<feature type="strand" evidence="53">
    <location>
        <begin position="1648"/>
        <end position="1650"/>
    </location>
</feature>
<feature type="strand" evidence="53">
    <location>
        <begin position="1654"/>
        <end position="1656"/>
    </location>
</feature>
<feature type="helix" evidence="53">
    <location>
        <begin position="1669"/>
        <end position="1672"/>
    </location>
</feature>
<feature type="helix" evidence="54">
    <location>
        <begin position="2020"/>
        <end position="2033"/>
    </location>
</feature>
<feature type="turn" evidence="54">
    <location>
        <begin position="2034"/>
        <end position="2037"/>
    </location>
</feature>
<feature type="helix" evidence="54">
    <location>
        <begin position="2041"/>
        <end position="2053"/>
    </location>
</feature>
<feature type="helix" evidence="54">
    <location>
        <begin position="2057"/>
        <end position="2062"/>
    </location>
</feature>
<feature type="strand" evidence="54">
    <location>
        <begin position="2065"/>
        <end position="2067"/>
    </location>
</feature>
<feature type="helix" evidence="54">
    <location>
        <begin position="2096"/>
        <end position="2107"/>
    </location>
</feature>
<feature type="helix" evidence="54">
    <location>
        <begin position="2117"/>
        <end position="2134"/>
    </location>
</feature>
<feature type="strand" evidence="54">
    <location>
        <begin position="2137"/>
        <end position="2139"/>
    </location>
</feature>
<feature type="helix" evidence="54">
    <location>
        <begin position="2140"/>
        <end position="2145"/>
    </location>
</feature>
<feature type="helix" evidence="54">
    <location>
        <begin position="2152"/>
        <end position="2163"/>
    </location>
</feature>
<feature type="helix" evidence="54">
    <location>
        <begin position="2165"/>
        <end position="2174"/>
    </location>
</feature>
<feature type="helix" evidence="54">
    <location>
        <begin position="2185"/>
        <end position="2187"/>
    </location>
</feature>
<feature type="helix" evidence="54">
    <location>
        <begin position="2218"/>
        <end position="2239"/>
    </location>
</feature>
<feature type="strand" evidence="54">
    <location>
        <begin position="2244"/>
        <end position="2246"/>
    </location>
</feature>
<feature type="helix" evidence="54">
    <location>
        <begin position="2252"/>
        <end position="2262"/>
    </location>
</feature>
<feature type="strand" evidence="54">
    <location>
        <begin position="2268"/>
        <end position="2273"/>
    </location>
</feature>
<feature type="helix" evidence="54">
    <location>
        <begin position="2279"/>
        <end position="2281"/>
    </location>
</feature>
<feature type="helix" evidence="54">
    <location>
        <begin position="2283"/>
        <end position="2295"/>
    </location>
</feature>
<feature type="helix" evidence="54">
    <location>
        <begin position="2300"/>
        <end position="2314"/>
    </location>
</feature>
<feature type="helix" evidence="54">
    <location>
        <begin position="2328"/>
        <end position="2353"/>
    </location>
</feature>
<feature type="helix" evidence="54">
    <location>
        <begin position="2355"/>
        <end position="2358"/>
    </location>
</feature>
<feature type="strand" evidence="54">
    <location>
        <begin position="2363"/>
        <end position="2366"/>
    </location>
</feature>
<feature type="strand" evidence="54">
    <location>
        <begin position="2369"/>
        <end position="2373"/>
    </location>
</feature>
<feature type="helix" evidence="54">
    <location>
        <begin position="2379"/>
        <end position="2389"/>
    </location>
</feature>
<feature type="strand" evidence="54">
    <location>
        <begin position="2392"/>
        <end position="2399"/>
    </location>
</feature>
<feature type="turn" evidence="55">
    <location>
        <begin position="2400"/>
        <end position="2402"/>
    </location>
</feature>
<feature type="strand" evidence="54">
    <location>
        <begin position="2408"/>
        <end position="2414"/>
    </location>
</feature>
<feature type="turn" evidence="54">
    <location>
        <begin position="2416"/>
        <end position="2418"/>
    </location>
</feature>
<feature type="strand" evidence="54">
    <location>
        <begin position="2421"/>
        <end position="2425"/>
    </location>
</feature>
<feature type="helix" evidence="54">
    <location>
        <begin position="2427"/>
        <end position="2434"/>
    </location>
</feature>
<feature type="helix" evidence="54">
    <location>
        <begin position="2442"/>
        <end position="2459"/>
    </location>
</feature>
<feature type="turn" evidence="54">
    <location>
        <begin position="2462"/>
        <end position="2464"/>
    </location>
</feature>
<feature type="helix" evidence="54">
    <location>
        <begin position="2465"/>
        <end position="2476"/>
    </location>
</feature>
<feature type="helix" evidence="54">
    <location>
        <begin position="2482"/>
        <end position="2493"/>
    </location>
</feature>
<feature type="helix" evidence="54">
    <location>
        <begin position="2495"/>
        <end position="2502"/>
    </location>
</feature>
<organismHost>
    <name type="scientific">Acrocephalus scirpaceus</name>
    <name type="common">Eurasian reed-warbler</name>
    <dbReference type="NCBI Taxonomy" id="48156"/>
</organismHost>
<organismHost>
    <name type="scientific">Aedes</name>
    <dbReference type="NCBI Taxonomy" id="7158"/>
</organismHost>
<organismHost>
    <name type="scientific">Culex</name>
    <dbReference type="NCBI Taxonomy" id="53527"/>
</organismHost>
<organismHost>
    <name type="scientific">Homo sapiens</name>
    <name type="common">Human</name>
    <dbReference type="NCBI Taxonomy" id="9606"/>
</organismHost>
<organismHost>
    <name type="scientific">Motacilla alba</name>
    <name type="common">White wagtail</name>
    <name type="synonym">Pied wagtail</name>
    <dbReference type="NCBI Taxonomy" id="45807"/>
</organismHost>
<organismHost>
    <name type="scientific">Streptopelia turtur</name>
    <dbReference type="NCBI Taxonomy" id="177155"/>
</organismHost>
<protein>
    <recommendedName>
        <fullName>Polyprotein P1234</fullName>
        <shortName>P1234</shortName>
    </recommendedName>
    <alternativeName>
        <fullName>Non-structural polyprotein</fullName>
    </alternativeName>
    <alternativeName>
        <fullName>p270 nonstructural polyprotein</fullName>
    </alternativeName>
    <component>
        <recommendedName>
            <fullName>Polyprotein P123'</fullName>
            <shortName>P123'</shortName>
        </recommendedName>
    </component>
    <component>
        <recommendedName>
            <fullName>Polyprotein P123</fullName>
            <shortName>P123</shortName>
        </recommendedName>
    </component>
    <component>
        <recommendedName>
            <fullName>mRNA-capping enzyme nsP1</fullName>
            <ecNumber evidence="3">2.1.1.-</ecNumber>
            <ecNumber evidence="31">2.7.7.-</ecNumber>
        </recommendedName>
        <alternativeName>
            <fullName>Non-structural protein 1</fullName>
        </alternativeName>
    </component>
    <component>
        <recommendedName>
            <fullName>Protease nsP2</fullName>
            <ecNumber evidence="4">3.4.22.-</ecNumber>
            <ecNumber evidence="4">3.6.1.15</ecNumber>
            <ecNumber evidence="2">3.6.1.74</ecNumber>
            <ecNumber evidence="4">3.6.4.13</ecNumber>
        </recommendedName>
        <alternativeName>
            <fullName>Non-structural protein 2</fullName>
            <shortName>nsP2</shortName>
        </alternativeName>
    </component>
    <component>
        <recommendedName>
            <fullName>Non-structural protein 3'</fullName>
            <shortName>nsP3'</shortName>
            <ecNumber evidence="38">3.1.3.84</ecNumber>
        </recommendedName>
    </component>
    <component>
        <recommendedName>
            <fullName>Non-structural protein 3</fullName>
            <shortName>nsP3</shortName>
            <ecNumber evidence="4">3.1.3.84</ecNumber>
        </recommendedName>
    </component>
    <component>
        <recommendedName>
            <fullName>RNA-directed RNA polymerase nsP4</fullName>
            <ecNumber evidence="15">2.7.7.19</ecNumber>
            <ecNumber evidence="6 19">2.7.7.48</ecNumber>
        </recommendedName>
        <alternativeName>
            <fullName>Non-structural protein 4</fullName>
            <shortName>nsP4</shortName>
        </alternativeName>
    </component>
</protein>
<organism>
    <name type="scientific">Sindbis virus</name>
    <name type="common">SINV</name>
    <dbReference type="NCBI Taxonomy" id="11034"/>
    <lineage>
        <taxon>Viruses</taxon>
        <taxon>Riboviria</taxon>
        <taxon>Orthornavirae</taxon>
        <taxon>Kitrinoviricota</taxon>
        <taxon>Alsuviricetes</taxon>
        <taxon>Martellivirales</taxon>
        <taxon>Togaviridae</taxon>
        <taxon>Alphavirus</taxon>
    </lineage>
</organism>
<comment type="function">
    <molecule>Polyprotein P1234</molecule>
    <text evidence="4">Inactive precursor of the viral replicase, which is activated by cleavages carried out by the viral protease nsP2.</text>
</comment>
<comment type="function">
    <molecule>Polyprotein P123</molecule>
    <text evidence="30 33">The early replication complex formed by the polyprotein P123 and nsP4 synthesizes minus-strand RNAs (PubMed:7517863, PubMed:8107248). Polyprotein P123 is a short-lived polyprotein that accumulates during early stage of infection (PubMed:7517863, PubMed:8107248). As soon P123 is cleaved into mature proteins, the plus-strand RNAs synthesis begins (PubMed:7517863, PubMed:8107248).</text>
</comment>
<comment type="function">
    <molecule>Polyprotein P123'</molecule>
    <text evidence="48 51">The early replication complex formed by the polyprotein P123' and nsP4 synthesizes minus-strand RNAs (Probable). Polyprotein P123' is a short-lived polyprotein that accumulates during early stage of infection (Probable). As soon P123' is cleaved into mature proteins, the plus-strand RNAs synthesis begins (Probable).</text>
</comment>
<comment type="function">
    <molecule>mRNA-capping enzyme nsP1</molecule>
    <text evidence="2 4 17 31 38 49">Cytoplasmic capping enzyme that catalyzes two virus-specific reactions: methyltransferase and nsP1 guanylyltransferase (PubMed:7831320). mRNA-capping is necessary since all viral RNAs are synthesized in the cytoplasm, and host capping enzymes are restricted to the nucleus (Probable). The enzymatic reaction involves a covalent link between 7-methyl-GMP and nsP1, whereas eukaryotic capping enzymes form a covalent complex only with GMP (Probable). nsP1 capping consists in the following reactions: GTP is first methylated into 7-methyl-GMP and then is covalently linked to nsP1 to form the m7GMp-nsP1 complex from which 7-methyl-GMP complex is transferred to the mRNA to create the cap structure (Probable). NsP1 is needed for the initiation of the minus-strand RNAs synthesis (PubMed:1824787). Probably serves as a membrane anchor for the replication complex composed of nsP1-nsP4 (By similarity). Palmitoylated nsP1 is remodeling host cell cytoskeleton, and induces filopodium-like structure formation at the surface of the host cell (By similarity).</text>
</comment>
<comment type="function">
    <molecule>Protease nsP2</molecule>
    <text evidence="2 4 16 23 28 35 43">Multifunctional protein whose N-terminus is part of the RNA polymerase complex and displays NTPase, RNA triphosphatase and helicase activities (By similarity). NTPase and RNA triphosphatase are involved in viral RNA capping and helicase keeps a check on the dsRNA replication intermediates (By similarity). The C-terminus harbors a protease that specifically cleaves the polyproteins and releases the mature proteins (By similarity). Required for the shutoff of minus-strand RNAs synthesis (PubMed:8627744). Specifically inhibits the host IFN response by promoting the nuclear export of host STAT1 (By similarity). Also inhibits host transcription by inducing rapid proteasome-dependent degradation of POLR2A, a catalytic subunit of the RNAPII complex (PubMed:17108023, PubMed:22514352, PubMed:30232189). The resulting inhibition of cellular protein synthesis serves to ensure maximal viral gene expression and to evade host immune response (Probable).</text>
</comment>
<comment type="function">
    <molecule>Non-structural protein 3</molecule>
    <text evidence="4 18 27 32">Seems to be essential for minus-strand RNAs and subgenomic 26S mRNAs synthesis (PubMed:8057460). Displays mono-ADP-ribosylhydrolase activity (PubMed:28150709). ADP-ribosylation is a post-translantional modification that controls various processes of the host cell and the virus probably needs to revert it for optimal viral replication (PubMed:28150709). Binds proteins of G3BP family and sequesters them into the viral RNA replication complexes thereby inhibiting the formation of host stress granules on viral mRNAs (PubMed:18684830). The nsp3-G3BP complexes bind viral RNAs and probably orchestrate the assembly of viral replication complexes, thanks to the ability of G3BP family members to self-assemble and bind DNA (By similarity).</text>
</comment>
<comment type="function">
    <molecule>Non-structural protein 3'</molecule>
    <text evidence="4 40 46 50">Seems to be essential for minus-strand RNAs and subgenomic 26S mRNAs synthesis (Probable). Displays mono-ADP-ribosylhydrolase activity (Probable). ADP-ribosylation is a post-translational modification that controls various processes of the host cell and the virus probably needs to revert it for optimal viral replication (Probable). Binds proteins of G3BP family and sequesters them into the viral RNA replication complexes thereby inhibiting the formation of host stress granules on viral mRNAs (Probable). The nsp3'-G3BP complexes bind viral RNAs and probably orchestrate the assembly of viral replication complexes, thanks to the ability of G3BP family members to self-assemble and bind DNA (By similarity).</text>
</comment>
<comment type="function">
    <molecule>RNA-directed RNA polymerase nsP4</molecule>
    <text evidence="15 19 26 30 33">RNA dependent RNA polymerase (PubMed:19036396, PubMed:7517863, PubMed:8107248). Replicates genomic and antigenomic RNA by recognizing replications specific signals. The early replication complex formed by the polyprotein P123 and nsP4 synthesizes minus-strand RNAs (PubMed:2529379, PubMed:7517863, PubMed:8107248). The late replication complex composed of fully processed nsP1-nsP4 is responsible for the production of genomic and subgenomic plus-strand RNAs (PubMed:7517863, PubMed:8107248). The core catalytic domain of nsP4 also possesses terminal adenylyltransferase (TATase) activity that is probably involved in maintenance and repair of the poly(A) tail, an element required for replication of the viral genome (PubMed:17005674).</text>
</comment>
<comment type="catalytic activity">
    <reaction evidence="3">
        <text>GTP + S-adenosyl-L-methionine = N(7)-methyl-GTP + S-adenosyl-L-homocysteine</text>
        <dbReference type="Rhea" id="RHEA:46948"/>
        <dbReference type="ChEBI" id="CHEBI:37565"/>
        <dbReference type="ChEBI" id="CHEBI:57856"/>
        <dbReference type="ChEBI" id="CHEBI:59789"/>
        <dbReference type="ChEBI" id="CHEBI:87133"/>
    </reaction>
</comment>
<comment type="catalytic activity">
    <reaction evidence="31">
        <text>N(7)-methyl-GTP + L-histidyl-[protein] = N(tele)-(N(7)-methylguanosine 5'-phospho)-L-histidyl-[protein] + diphosphate</text>
        <dbReference type="Rhea" id="RHEA:54792"/>
        <dbReference type="Rhea" id="RHEA-COMP:9745"/>
        <dbReference type="Rhea" id="RHEA-COMP:13995"/>
        <dbReference type="ChEBI" id="CHEBI:29979"/>
        <dbReference type="ChEBI" id="CHEBI:33019"/>
        <dbReference type="ChEBI" id="CHEBI:87133"/>
        <dbReference type="ChEBI" id="CHEBI:138334"/>
    </reaction>
    <physiologicalReaction direction="left-to-right" evidence="31">
        <dbReference type="Rhea" id="RHEA:54793"/>
    </physiologicalReaction>
</comment>
<comment type="catalytic activity">
    <reaction evidence="3">
        <text>N(tele)-(N(7)-methylguanosine 5'-phospho)-L-histidyl-[protein] + a 5'-end diphospho-(purine-ribonucleoside) in mRNA + H(+) = a 5'-end (N(7)-methyl 5'-triphosphoguanosine)-(purine-ribonucleoside) in mRNA + L-histidyl-[protein]</text>
        <dbReference type="Rhea" id="RHEA:54800"/>
        <dbReference type="Rhea" id="RHEA-COMP:9745"/>
        <dbReference type="Rhea" id="RHEA-COMP:12925"/>
        <dbReference type="Rhea" id="RHEA-COMP:13929"/>
        <dbReference type="Rhea" id="RHEA-COMP:13995"/>
        <dbReference type="ChEBI" id="CHEBI:15378"/>
        <dbReference type="ChEBI" id="CHEBI:29979"/>
        <dbReference type="ChEBI" id="CHEBI:133968"/>
        <dbReference type="ChEBI" id="CHEBI:138276"/>
        <dbReference type="ChEBI" id="CHEBI:138334"/>
    </reaction>
</comment>
<comment type="catalytic activity">
    <reaction evidence="2">
        <text>a 5'-end triphospho-ribonucleoside in mRNA + H2O = a 5'-end diphospho-ribonucleoside in mRNA + phosphate + H(+)</text>
        <dbReference type="Rhea" id="RHEA:67004"/>
        <dbReference type="Rhea" id="RHEA-COMP:17164"/>
        <dbReference type="Rhea" id="RHEA-COMP:17165"/>
        <dbReference type="ChEBI" id="CHEBI:15377"/>
        <dbReference type="ChEBI" id="CHEBI:15378"/>
        <dbReference type="ChEBI" id="CHEBI:43474"/>
        <dbReference type="ChEBI" id="CHEBI:167616"/>
        <dbReference type="ChEBI" id="CHEBI:167618"/>
        <dbReference type="EC" id="3.6.1.74"/>
    </reaction>
    <physiologicalReaction direction="left-to-right" evidence="2">
        <dbReference type="Rhea" id="RHEA:67005"/>
    </physiologicalReaction>
</comment>
<comment type="catalytic activity">
    <reaction evidence="4">
        <text>a ribonucleoside 5'-triphosphate + H2O = a ribonucleoside 5'-diphosphate + phosphate + H(+)</text>
        <dbReference type="Rhea" id="RHEA:23680"/>
        <dbReference type="ChEBI" id="CHEBI:15377"/>
        <dbReference type="ChEBI" id="CHEBI:15378"/>
        <dbReference type="ChEBI" id="CHEBI:43474"/>
        <dbReference type="ChEBI" id="CHEBI:57930"/>
        <dbReference type="ChEBI" id="CHEBI:61557"/>
        <dbReference type="EC" id="3.6.1.15"/>
    </reaction>
</comment>
<comment type="catalytic activity">
    <reaction evidence="4">
        <text>ATP + H2O = ADP + phosphate + H(+)</text>
        <dbReference type="Rhea" id="RHEA:13065"/>
        <dbReference type="ChEBI" id="CHEBI:15377"/>
        <dbReference type="ChEBI" id="CHEBI:15378"/>
        <dbReference type="ChEBI" id="CHEBI:30616"/>
        <dbReference type="ChEBI" id="CHEBI:43474"/>
        <dbReference type="ChEBI" id="CHEBI:456216"/>
        <dbReference type="EC" id="3.6.4.13"/>
    </reaction>
</comment>
<comment type="catalytic activity">
    <reaction evidence="6 19">
        <text>RNA(n) + a ribonucleoside 5'-triphosphate = RNA(n+1) + diphosphate</text>
        <dbReference type="Rhea" id="RHEA:21248"/>
        <dbReference type="Rhea" id="RHEA-COMP:14527"/>
        <dbReference type="Rhea" id="RHEA-COMP:17342"/>
        <dbReference type="ChEBI" id="CHEBI:33019"/>
        <dbReference type="ChEBI" id="CHEBI:61557"/>
        <dbReference type="ChEBI" id="CHEBI:140395"/>
        <dbReference type="EC" id="2.7.7.48"/>
    </reaction>
</comment>
<comment type="catalytic activity">
    <reaction evidence="15">
        <text>RNA(n) + ATP = RNA(n)-3'-adenine ribonucleotide + diphosphate</text>
        <dbReference type="Rhea" id="RHEA:11332"/>
        <dbReference type="Rhea" id="RHEA-COMP:14527"/>
        <dbReference type="Rhea" id="RHEA-COMP:17347"/>
        <dbReference type="ChEBI" id="CHEBI:30616"/>
        <dbReference type="ChEBI" id="CHEBI:33019"/>
        <dbReference type="ChEBI" id="CHEBI:140395"/>
        <dbReference type="ChEBI" id="CHEBI:173115"/>
        <dbReference type="EC" id="2.7.7.19"/>
    </reaction>
</comment>
<comment type="catalytic activity">
    <reaction evidence="27">
        <text>4-O-(ADP-D-ribosyl)-L-aspartyl-[protein] + H2O = L-aspartyl-[protein] + ADP-D-ribose + H(+)</text>
        <dbReference type="Rhea" id="RHEA:54428"/>
        <dbReference type="Rhea" id="RHEA-COMP:9867"/>
        <dbReference type="Rhea" id="RHEA-COMP:13832"/>
        <dbReference type="ChEBI" id="CHEBI:15377"/>
        <dbReference type="ChEBI" id="CHEBI:15378"/>
        <dbReference type="ChEBI" id="CHEBI:29961"/>
        <dbReference type="ChEBI" id="CHEBI:57967"/>
        <dbReference type="ChEBI" id="CHEBI:138102"/>
    </reaction>
    <physiologicalReaction direction="left-to-right" evidence="27">
        <dbReference type="Rhea" id="RHEA:54429"/>
    </physiologicalReaction>
</comment>
<comment type="catalytic activity">
    <reaction evidence="27">
        <text>5-O-(ADP-D-ribosyl)-L-glutamyl-[protein] + H2O = L-glutamyl-[protein] + ADP-D-ribose + H(+)</text>
        <dbReference type="Rhea" id="RHEA:58248"/>
        <dbReference type="Rhea" id="RHEA-COMP:10208"/>
        <dbReference type="Rhea" id="RHEA-COMP:15089"/>
        <dbReference type="ChEBI" id="CHEBI:15377"/>
        <dbReference type="ChEBI" id="CHEBI:15378"/>
        <dbReference type="ChEBI" id="CHEBI:29973"/>
        <dbReference type="ChEBI" id="CHEBI:57967"/>
        <dbReference type="ChEBI" id="CHEBI:142540"/>
    </reaction>
    <physiologicalReaction direction="left-to-right" evidence="27">
        <dbReference type="Rhea" id="RHEA:58249"/>
    </physiologicalReaction>
</comment>
<comment type="catalytic activity">
    <reaction evidence="4">
        <text>ADP-alpha-D-ribose 1''-phosphate + H2O = ADP-D-ribose + phosphate</text>
        <dbReference type="Rhea" id="RHEA:25029"/>
        <dbReference type="ChEBI" id="CHEBI:15377"/>
        <dbReference type="ChEBI" id="CHEBI:43474"/>
        <dbReference type="ChEBI" id="CHEBI:57967"/>
        <dbReference type="ChEBI" id="CHEBI:58753"/>
        <dbReference type="EC" id="3.1.3.84"/>
    </reaction>
    <physiologicalReaction direction="left-to-right" evidence="4">
        <dbReference type="Rhea" id="RHEA:25030"/>
    </physiologicalReaction>
</comment>
<comment type="cofactor">
    <cofactor evidence="15">
        <name>Mg(2+)</name>
        <dbReference type="ChEBI" id="CHEBI:18420"/>
    </cofactor>
    <cofactor evidence="15">
        <name>Mn(2+)</name>
        <dbReference type="ChEBI" id="CHEBI:29035"/>
    </cofactor>
    <text evidence="15">For nsP4 adenylyltransferase activity; Mn(2+) supports catalysis at 60% of the levels observed with Mg(2+).</text>
</comment>
<comment type="cofactor">
    <cofactor evidence="19">
        <name>Mg(2+)</name>
        <dbReference type="ChEBI" id="CHEBI:18420"/>
    </cofactor>
    <text evidence="19">For nsP4 RNA-directed RNA polymerase activity.</text>
</comment>
<comment type="cofactor">
    <cofactor evidence="3">
        <name>Mg(2+)</name>
        <dbReference type="ChEBI" id="CHEBI:18420"/>
    </cofactor>
    <text evidence="3">For nsP1 guanylylation.</text>
</comment>
<comment type="cofactor">
    <cofactor>
        <name>Mg(2+)</name>
        <dbReference type="ChEBI" id="CHEBI:18420"/>
    </cofactor>
    <text evidence="4">For nsP2 RNA triphosphatase activity.</text>
</comment>
<comment type="cofactor">
    <cofactor>
        <name>Mg(2+)</name>
        <dbReference type="ChEBI" id="CHEBI:18420"/>
    </cofactor>
    <text evidence="4">For nsP2 NTPase activity.</text>
</comment>
<comment type="biophysicochemical properties">
    <phDependence>
        <text evidence="15 19">Optimum pH is 8.0-8.5 for nsP4 polymerase and adenylyltransferase activities.</text>
    </phDependence>
    <temperatureDependence>
        <text evidence="15">Optimum temperature is 25 degrees Celsius for nsP4 adenylyltransferase activity.</text>
    </temperatureDependence>
</comment>
<comment type="subunit">
    <molecule>mRNA-capping enzyme nsP1</molecule>
    <text evidence="3 29">Interacts with non-structural protein 3 (By similarity). Interacts with RNA-directed RNA polymerase nsP4 (By similarity). Interacts with protease nsP2 (By similarity). interacts with itself (By similarity). Interacts with host TMEM45B; this interaction leads to viral replication inhibition (PubMed:35938871).</text>
</comment>
<comment type="subunit">
    <molecule>Non-structural protein 3</molecule>
    <text evidence="3 18">Interacts with mRNA-capping enzyme nsP1 (By similarity). Interacts with host DDX1 (By similarity). Interacts with host DDX3 (By similarity). Interacts (via C-terminus) with host G3BP1; this interaction inhibits the formation of host stress granules on viral mRNAs and the nsp3-G3BP1 complexes bind viral RNAs and probably orchestrate the assembly of viral replication complexes (PubMed:18684830). Interacts (via C-terminus) with host G3BP2; this interaction inhibits the formation of host stress granules on viral mRNAs and the nsp3-G3BP2 complexes bind viral RNAs and probably orchestrate the assembly of viral replication complexes (PubMed:18684830).</text>
</comment>
<comment type="subunit">
    <molecule>RNA-directed RNA polymerase nsP4</molecule>
    <text evidence="3 29">Interacts with mRNA-capping enzyme nsP1 (By similarity). Interacts with protease nsP2 (By similarity). interacts with itself (By similarity). Interacts with host TMEM45B; this interaction leads to viral replication inhibition (PubMed:35938871).</text>
</comment>
<comment type="subunit">
    <molecule>Protease nsP2</molecule>
    <text evidence="3">Interacts with RNA-directed RNA polymerase nsP4 (By similarity). Interacts with mRNA-capping enzyme nsP1 (By similarity). Interacts with KPNA1/karyopherin-alpha1; this interaction probably allows the active transport of protease nsP2 into the host nucleus (By similarity).</text>
</comment>
<comment type="subcellular location">
    <molecule>Polyprotein P1234</molecule>
    <subcellularLocation>
        <location evidence="38">Host cytoplasmic vesicle membrane</location>
        <topology evidence="38">Peripheral membrane protein</topology>
    </subcellularLocation>
    <text evidence="38">Part of cytoplasmic vesicles, which are probably formed at the plasma membrane and internalized leading to late endosomal/lysosomal spherules containing the replication complex.</text>
</comment>
<comment type="subcellular location">
    <molecule>Polyprotein P123'</molecule>
    <subcellularLocation>
        <location evidence="38">Host cytoplasmic vesicle membrane</location>
        <topology evidence="38">Peripheral membrane protein</topology>
    </subcellularLocation>
    <text evidence="38">Part of cytoplasmic vesicles, which are probably formed at the plasma membrane and internalized leading to late endosomal/lysosomal spherules containing the replication complex.</text>
</comment>
<comment type="subcellular location">
    <molecule>Polyprotein P123</molecule>
    <subcellularLocation>
        <location evidence="38">Host cytoplasmic vesicle membrane</location>
        <topology evidence="38">Peripheral membrane protein</topology>
    </subcellularLocation>
    <text evidence="38">Part of cytoplasmic vesicles, which are probably formed at the plasma membrane and internalized leading to late endosomal/lysosomal spherules containing the replication complex.</text>
</comment>
<comment type="subcellular location">
    <molecule>mRNA-capping enzyme nsP1</molecule>
    <subcellularLocation>
        <location evidence="2">Host cytoplasmic vesicle membrane</location>
        <topology evidence="2">Lipid-anchor</topology>
    </subcellularLocation>
    <subcellularLocation>
        <location evidence="2">Host cell membrane</location>
        <topology evidence="2">Lipid-anchor</topology>
        <orientation evidence="2">Cytoplasmic side</orientation>
    </subcellularLocation>
    <subcellularLocation>
        <location evidence="2">Host cell projection</location>
        <location evidence="2">Host filopodium</location>
    </subcellularLocation>
    <text evidence="2">In the late phase of infection, the polyprotein is quickly cleaved before localization to cellular membranes. Then a fraction of nsP1 localizes to the inner surface of the plasma membrane and its filopodial extensions. Only the palmitoylated nsP1 localizes to the host filopodia (By similarity). NsP1 is also part of cytoplasmic vesicles, which are probably formed at the plasma membrane and internalized leading to late endosomal/lysosomal spherules containing the replication complex (By similarity).</text>
</comment>
<comment type="subcellular location">
    <molecule>Protease nsP2</molecule>
    <subcellularLocation>
        <location evidence="2">Host cytoplasmic vesicle membrane</location>
        <topology evidence="2">Peripheral membrane protein</topology>
    </subcellularLocation>
    <subcellularLocation>
        <location evidence="3">Host nucleus</location>
    </subcellularLocation>
    <subcellularLocation>
        <location evidence="3">Host cytoplasm</location>
    </subcellularLocation>
    <text evidence="2 3">In the late phase of infection, the polyprotein is quickly cleaved before localization to cellular membranes. Then approximately half of nsP2 is found in the nucleus (By similarity). Shuttles between cytoplasm and nucleus (By similarity). NsP2 is also part of cytoplasmic vesicles, which are probably formed at the plasma membrane and internalized leading to late endosomal/lysosomal spherules containing the replication complex (By similarity).</text>
</comment>
<comment type="subcellular location">
    <molecule>Non-structural protein 3</molecule>
    <subcellularLocation>
        <location evidence="14">Host cytoplasmic vesicle membrane</location>
        <topology evidence="38">Peripheral membrane protein</topology>
    </subcellularLocation>
    <text evidence="14">In the late phase of infection, the polyprotein is quickly cleaved before localization to cellular membranes. Then nsP3 and nsP3' form aggregates in cytoplasm (PubMed:16571828). NsP3 is also part of cytoplasmic vesicles, which are probably formed at the plasma membrane and internalized leading to late endosomal/lysosomal spherules containing the replication complex (PubMed:16571828).</text>
</comment>
<comment type="subcellular location">
    <molecule>Non-structural protein 3'</molecule>
    <subcellularLocation>
        <location evidence="39">Host cytoplasmic vesicle membrane</location>
        <topology evidence="38">Peripheral membrane protein</topology>
    </subcellularLocation>
    <text evidence="39">In the late phase of infection, the polyprotein is quickly cleaved before localization to cellular membranes. Then nsP3 and nsP3' form aggregates in cytoplasm (Probable). NsP3' is also part of cytoplasmic vesicles, which are probably formed at the plasma membrane and internalized leading to late endosomal/lysosomal spherules containing the replication complex (Probable).</text>
</comment>
<comment type="subcellular location">
    <molecule>RNA-directed RNA polymerase nsP4</molecule>
    <subcellularLocation>
        <location>Host cytoplasmic vesicle membrane</location>
        <topology evidence="47">Peripheral membrane protein</topology>
    </subcellularLocation>
    <text evidence="2">NsP4 is part of cytoplasmic vesicles, which are probably formed at the plasma membrane and internalized leading to late endosomal/lysosomal spherules containing the replication complex.</text>
</comment>
<comment type="domain">
    <molecule>Protease nsP2</molecule>
    <text evidence="3 4">The N-terminus exhibits NTPase and RNA triphosphatase activities and is proposed to have helicase activity, whereas the C-terminus possesses protease activity (By similarity). Contains a nuclear localization signal and a nuclear export signal, these two motifs are probably involved in the shuttling between the cytoplasm and the nucleus of nsP2 (By similarity). The C-terminus is required for promoting the export of host STAT1 (By similarity).</text>
</comment>
<comment type="domain">
    <molecule>Non-structural protein 3</molecule>
    <text evidence="2 24 27">In the N-terminus, the macro domain displays a mono-ADP-ribosylhydrolase activity (PubMed:28150709). The central part has a zinc-binding function (PubMed:23010928). The C-terminus contains two FGDF motifs necessary and sufficient for formation of the nsP3/G3BP1 complex (By similarity).</text>
</comment>
<comment type="domain">
    <molecule>Non-structural protein 3'</molecule>
    <text evidence="2 44 46">In the N-terminus, the macro domain displays a mono-ADP-ribosylhydrolase activity (Probable). The central part has a zinc-binding function (Probable). The C-terminus contains two FGDF motifs necessary and sufficient for formation of the nsP3'/G3BP1 complex (By similarity).</text>
</comment>
<comment type="PTM">
    <molecule>Polyprotein P1234</molecule>
    <text evidence="22 33 48">Specific enzymatic cleavages in vivo yield mature proteins (PubMed:2142454, PubMed:8107248). The processing of the polyprotein is temporally regulated (PubMed:2142454). In early stages (1.7 hpi), P1234 is first cleaved in trans through its nsP2 protease activity, releasing P123' and nsP4, which associate to form the early replication complex (Probable) (PubMed:2142454, PubMed:8107248). At the same time, P1234 is also cut at the nsP1/nsP2 site early in infection but with lower efficiency (PubMed:2142454). After replication of the viral minus-strand RNAs (4 hpi), the polyproteins are cut at the nsP1/nsP2 and nsP2/nsP3 sites very efficiently, preventing accumulation of P123' and P1234 and allowing the formation of the late replication complex (Probable) (PubMed:2142454, PubMed:8107248). NsP3'/nsP4 site is not cleaved anymore and P34 is produced rather than nsP4 (PubMed:2142454).</text>
</comment>
<comment type="PTM">
    <molecule>Polyprotein P123</molecule>
    <text evidence="21 22 26 33">Specific enzymatic cleavages in vivo yield mature proteins (PubMed:2141206, PubMed:2142454, PubMed:2529379, PubMed:8107248). The processing of the polyprotein is temporally regulated (PubMed:2142454). In early stages (1.7 hpi), P123 is cleaved at the nsP1/nsP2 site with low efficiency (PubMed:2142454). After replication of the viral minus-strand RNAs (4 hpi), the polyproteins are cut at the nsP1/nsP2 and nsP2/nsP3 sites very efficiently, preventing accumulation of P123 and allowing the formation of the late replication complex (PubMed:2142454).</text>
</comment>
<comment type="PTM">
    <molecule>Polyprotein P123'</molecule>
    <text evidence="41 42 45 48 51">Specific enzymatic cleavages in vivo yield mature proteins (Probable). The processing of the polyprotein is temporally regulated (Probable). In early stages (1.7 hpi), P123' is cleaved at the nsP1/nsP2 site with low efficiency (Probable). After replication of the viral minus-strand RNAs (4 hpi), the polyproteins are cut at the nsP1/nsP2 and nsP2/nsP3 sites very efficiently, preventing accumulation of P123' and allowing the formation of the late replication complex (Probable).</text>
</comment>
<comment type="PTM">
    <molecule>mRNA-capping enzyme nsP1</molecule>
    <text evidence="4">Palmitoylated by host palmitoyltransferases ZDHHC2 and ZDHHC19.</text>
</comment>
<comment type="PTM">
    <molecule>Non-structural protein 3</molecule>
    <text evidence="2">Phosphorylated by host on serines and threonines.</text>
</comment>
<comment type="PTM">
    <molecule>Non-structural protein 3'</molecule>
    <text evidence="2">Phosphorylated by host on serines and threonines.</text>
</comment>
<comment type="PTM">
    <molecule>RNA-directed RNA polymerase nsP4</molecule>
    <text evidence="20">Ubiquitinated; targets the protein for rapid degradation via the ubiquitin system (PubMed:1924357). Nsp4 is present in extremely low quantities due to low frequency of translation through the amber stop-codon and the degradation by the ubiquitin pathway (PubMed:1924357).</text>
</comment>
<comment type="miscellaneous">
    <text evidence="13 37">Viral replication produces dsRNA in the late phase of infection, resulting in a strong activation of host EIF2AK2/PKR, leading to almost complete phosphorylation of EIF2A (PubMed:16391235). This inactivates completely cellular translation initiation, resulting shutoff of host proteins synthesis (PubMed:16391235). However, phosphorylation of EIF2A is probably not the only mechanism responsible for the host translation shutoff (PubMed:29419763). The viral translation can still occur normally because it relies on a hairpin structure in the coding region of sgRNA and is EIF2A-, EIF2D-, EIF4G- EIF4A-independent (PubMed:29419763).</text>
</comment>
<comment type="miscellaneous">
    <text evidence="1 25">The genome codes for P123, but readthrough of a terminator codon UGA occurs between the codons for Tyr-1896 and Leu-1898 giving rise to P1234 (PubMed:2521676). P1234 is cleaved quickly by nsP2 into P123' and nsP4 (By similarity). Further processing of p123' gives nsP1, nsP2 and nsP3' which is 6 amino acids longer than nsP3 since the cleavage site is after the readthrough (By similarity). This unusual molecular mechanism ensures that few nsP4 are produced compared to other non-structural proteins (By similarity). Mutant viruses with no alternative termination site grow significantly slower than wild-type virus (PubMed:2521676). The opal termination codon is frequently mutated to a sense codon on passage in cell culture (By similarity). The presence of the opal codon may be a requirement for viral maintenance in both vertebrate and invertebrate hosts and a selective advantage may be conferred in cell culture for the sense codon (By similarity).</text>
</comment>